<comment type="function">
    <text evidence="11 12 18">Conjugation of reduced glutathione to a wide number of exogenous and endogenous hydrophobic electrophiles. Involved in the formation of glutathione conjugates of both prostaglandin A2 (PGA2) and prostaglandin J2 (PGJ2) (PubMed:9084911). Participates in the formation of novel hepoxilin regioisomers (PubMed:21046276). Negatively regulates CDK5 activity via p25/p35 translocation to prevent neurodegeneration.</text>
</comment>
<comment type="catalytic activity">
    <reaction evidence="4 6 16">
        <text>RX + glutathione = an S-substituted glutathione + a halide anion + H(+)</text>
        <dbReference type="Rhea" id="RHEA:16437"/>
        <dbReference type="ChEBI" id="CHEBI:15378"/>
        <dbReference type="ChEBI" id="CHEBI:16042"/>
        <dbReference type="ChEBI" id="CHEBI:17792"/>
        <dbReference type="ChEBI" id="CHEBI:57925"/>
        <dbReference type="ChEBI" id="CHEBI:90779"/>
        <dbReference type="EC" id="2.5.1.18"/>
    </reaction>
    <physiologicalReaction direction="left-to-right" evidence="25">
        <dbReference type="Rhea" id="RHEA:16438"/>
    </physiologicalReaction>
</comment>
<comment type="catalytic activity">
    <reaction evidence="18">
        <text>prostaglandin J2 + glutathione = prostaglandin J2-S-(R)-glutathione</text>
        <dbReference type="Rhea" id="RHEA:50804"/>
        <dbReference type="ChEBI" id="CHEBI:57925"/>
        <dbReference type="ChEBI" id="CHEBI:133396"/>
        <dbReference type="ChEBI" id="CHEBI:133771"/>
    </reaction>
    <physiologicalReaction direction="left-to-right" evidence="27">
        <dbReference type="Rhea" id="RHEA:50805"/>
    </physiologicalReaction>
</comment>
<comment type="catalytic activity">
    <reaction evidence="18">
        <text>prostaglandin J2 + glutathione = prostaglandin J2-S-(S)-glutathione</text>
        <dbReference type="Rhea" id="RHEA:50808"/>
        <dbReference type="ChEBI" id="CHEBI:57925"/>
        <dbReference type="ChEBI" id="CHEBI:133396"/>
        <dbReference type="ChEBI" id="CHEBI:133772"/>
    </reaction>
    <physiologicalReaction direction="left-to-right" evidence="27">
        <dbReference type="Rhea" id="RHEA:50809"/>
    </physiologicalReaction>
</comment>
<comment type="catalytic activity">
    <reaction evidence="18">
        <text>prostaglandin A2 + glutathione = prostaglandin A2-S-(S)-glutathione</text>
        <dbReference type="Rhea" id="RHEA:50800"/>
        <dbReference type="ChEBI" id="CHEBI:57925"/>
        <dbReference type="ChEBI" id="CHEBI:133370"/>
        <dbReference type="ChEBI" id="CHEBI:133769"/>
    </reaction>
    <physiologicalReaction direction="left-to-right" evidence="27">
        <dbReference type="Rhea" id="RHEA:50801"/>
    </physiologicalReaction>
</comment>
<comment type="catalytic activity">
    <reaction evidence="11">
        <text>11(S)-hydroxy-14(S),15(S)-epoxy-(5Z,8Z,12E)-eicosatrienoate + glutathione = (11S,15S)-dihydroxy-14(R)-S-glutathionyl-(5Z,8Z,12E)-eicosatrienoate</text>
        <dbReference type="Rhea" id="RHEA:50260"/>
        <dbReference type="ChEBI" id="CHEBI:57925"/>
        <dbReference type="ChEBI" id="CHEBI:132200"/>
        <dbReference type="ChEBI" id="CHEBI:132201"/>
    </reaction>
    <physiologicalReaction direction="left-to-right" evidence="26">
        <dbReference type="Rhea" id="RHEA:50261"/>
    </physiologicalReaction>
</comment>
<comment type="biophysicochemical properties">
    <kinetics>
        <KM evidence="18">395 uM for prostaglandin A2 (at pH 7.0 and 37 degrees Celsius)</KM>
        <KM evidence="18">201 uM for prostaglandin J2 (at pH 7.0 and 37 degrees Celsius)</KM>
        <Vmax evidence="18">267.0 nmol/min/mg enzyme for the formation of the glutathione-S-conjugate of prostaglandin A2 (at pH 7.0 and 37 degrees Celsius)</Vmax>
        <Vmax evidence="18">105.0 nmol/min/mg enzyme for the formation of the glutathione-S-conjugate of prostaglandin J2 (at pH 7.0 and 37 degrees Celsius)</Vmax>
    </kinetics>
</comment>
<comment type="subunit">
    <text evidence="12 17">Homodimer. Interacts with CDK5.</text>
</comment>
<comment type="interaction">
    <interactant intactId="EBI-353467">
        <id>P09211</id>
    </interactant>
    <interactant intactId="EBI-10173507">
        <id>Q6UY14-3</id>
        <label>ADAMTSL4</label>
    </interactant>
    <organismsDiffer>false</organismsDiffer>
    <experiments>3</experiments>
</comment>
<comment type="interaction">
    <interactant intactId="EBI-353467">
        <id>P09211</id>
    </interactant>
    <interactant intactId="EBI-743771">
        <id>Q92624</id>
        <label>APPBP2</label>
    </interactant>
    <organismsDiffer>false</organismsDiffer>
    <experiments>6</experiments>
</comment>
<comment type="interaction">
    <interactant intactId="EBI-353467">
        <id>P09211</id>
    </interactant>
    <interactant intactId="EBI-3866279">
        <id>Q9BWT7</id>
        <label>CARD10</label>
    </interactant>
    <organismsDiffer>false</organismsDiffer>
    <experiments>3</experiments>
</comment>
<comment type="interaction">
    <interactant intactId="EBI-353467">
        <id>P09211</id>
    </interactant>
    <interactant intactId="EBI-3867333">
        <id>A8MQ03</id>
        <label>CYSRT1</label>
    </interactant>
    <organismsDiffer>false</organismsDiffer>
    <experiments>3</experiments>
</comment>
<comment type="interaction">
    <interactant intactId="EBI-353467">
        <id>P09211</id>
    </interactant>
    <interactant intactId="EBI-11615366">
        <id>Q9NRD0</id>
        <label>FBXO8</label>
    </interactant>
    <organismsDiffer>false</organismsDiffer>
    <experiments>3</experiments>
</comment>
<comment type="interaction">
    <interactant intactId="EBI-353467">
        <id>P09211</id>
    </interactant>
    <interactant intactId="EBI-750641">
        <id>Q5TD97</id>
        <label>FHL5</label>
    </interactant>
    <organismsDiffer>false</organismsDiffer>
    <experiments>3</experiments>
</comment>
<comment type="interaction">
    <interactant intactId="EBI-353467">
        <id>P09211</id>
    </interactant>
    <interactant intactId="EBI-740785">
        <id>P49639</id>
        <label>HOXA1</label>
    </interactant>
    <organismsDiffer>false</organismsDiffer>
    <experiments>3</experiments>
</comment>
<comment type="interaction">
    <interactant intactId="EBI-353467">
        <id>P09211</id>
    </interactant>
    <interactant intactId="EBI-948001">
        <id>Q15323</id>
        <label>KRT31</label>
    </interactant>
    <organismsDiffer>false</organismsDiffer>
    <experiments>6</experiments>
</comment>
<comment type="interaction">
    <interactant intactId="EBI-353467">
        <id>P09211</id>
    </interactant>
    <interactant intactId="EBI-1049638">
        <id>Q14525</id>
        <label>KRT33B</label>
    </interactant>
    <organismsDiffer>false</organismsDiffer>
    <experiments>3</experiments>
</comment>
<comment type="interaction">
    <interactant intactId="EBI-353467">
        <id>P09211</id>
    </interactant>
    <interactant intactId="EBI-1047093">
        <id>O76011</id>
        <label>KRT34</label>
    </interactant>
    <organismsDiffer>false</organismsDiffer>
    <experiments>3</experiments>
</comment>
<comment type="interaction">
    <interactant intactId="EBI-353467">
        <id>P09211</id>
    </interactant>
    <interactant intactId="EBI-10221390">
        <id>P78385</id>
        <label>KRT83</label>
    </interactant>
    <organismsDiffer>false</organismsDiffer>
    <experiments>3</experiments>
</comment>
<comment type="interaction">
    <interactant intactId="EBI-353467">
        <id>P09211</id>
    </interactant>
    <interactant intactId="EBI-11959885">
        <id>Q07627</id>
        <label>KRTAP1-1</label>
    </interactant>
    <organismsDiffer>false</organismsDiffer>
    <experiments>3</experiments>
</comment>
<comment type="interaction">
    <interactant intactId="EBI-353467">
        <id>P09211</id>
    </interactant>
    <interactant intactId="EBI-11749135">
        <id>Q8IUG1</id>
        <label>KRTAP1-3</label>
    </interactant>
    <organismsDiffer>false</organismsDiffer>
    <experiments>3</experiments>
</comment>
<comment type="interaction">
    <interactant intactId="EBI-353467">
        <id>P09211</id>
    </interactant>
    <interactant intactId="EBI-10172290">
        <id>P60409</id>
        <label>KRTAP10-7</label>
    </interactant>
    <organismsDiffer>false</organismsDiffer>
    <experiments>6</experiments>
</comment>
<comment type="interaction">
    <interactant intactId="EBI-353467">
        <id>P09211</id>
    </interactant>
    <interactant intactId="EBI-10172052">
        <id>P60411</id>
        <label>KRTAP10-9</label>
    </interactant>
    <organismsDiffer>false</organismsDiffer>
    <experiments>3</experiments>
</comment>
<comment type="interaction">
    <interactant intactId="EBI-353467">
        <id>P09211</id>
    </interactant>
    <interactant intactId="EBI-9996449">
        <id>Q9BYR8</id>
        <label>KRTAP3-1</label>
    </interactant>
    <organismsDiffer>false</organismsDiffer>
    <experiments>3</experiments>
</comment>
<comment type="interaction">
    <interactant intactId="EBI-353467">
        <id>P09211</id>
    </interactant>
    <interactant intactId="EBI-3957694">
        <id>Q9BYR6</id>
        <label>KRTAP3-3</label>
    </interactant>
    <organismsDiffer>false</organismsDiffer>
    <experiments>3</experiments>
</comment>
<comment type="interaction">
    <interactant intactId="EBI-353467">
        <id>P09211</id>
    </interactant>
    <interactant intactId="EBI-11962084">
        <id>Q3LI66</id>
        <label>KRTAP6-2</label>
    </interactant>
    <organismsDiffer>false</organismsDiffer>
    <experiments>3</experiments>
</comment>
<comment type="interaction">
    <interactant intactId="EBI-353467">
        <id>P09211</id>
    </interactant>
    <interactant intactId="EBI-18273118">
        <id>Q9P2M1</id>
        <label>LRP2BP</label>
    </interactant>
    <organismsDiffer>false</organismsDiffer>
    <experiments>3</experiments>
</comment>
<comment type="interaction">
    <interactant intactId="EBI-353467">
        <id>P09211</id>
    </interactant>
    <interactant intactId="EBI-11522433">
        <id>Q5JR59-3</id>
        <label>MTUS2</label>
    </interactant>
    <organismsDiffer>false</organismsDiffer>
    <experiments>3</experiments>
</comment>
<comment type="interaction">
    <interactant intactId="EBI-353467">
        <id>P09211</id>
    </interactant>
    <interactant intactId="EBI-945833">
        <id>Q7Z3S9</id>
        <label>NOTCH2NLA</label>
    </interactant>
    <organismsDiffer>false</organismsDiffer>
    <experiments>3</experiments>
</comment>
<comment type="interaction">
    <interactant intactId="EBI-353467">
        <id>P09211</id>
    </interactant>
    <interactant intactId="EBI-22310682">
        <id>P0DPK4</id>
        <label>NOTCH2NLC</label>
    </interactant>
    <organismsDiffer>false</organismsDiffer>
    <experiments>3</experiments>
</comment>
<comment type="interaction">
    <interactant intactId="EBI-353467">
        <id>P09211</id>
    </interactant>
    <interactant intactId="EBI-2562368">
        <id>P22735</id>
        <label>TGM1</label>
    </interactant>
    <organismsDiffer>false</organismsDiffer>
    <experiments>3</experiments>
</comment>
<comment type="interaction">
    <interactant intactId="EBI-353467">
        <id>P09211</id>
    </interactant>
    <interactant intactId="EBI-355744">
        <id>Q12933</id>
        <label>TRAF2</label>
    </interactant>
    <organismsDiffer>false</organismsDiffer>
    <experiments>5</experiments>
</comment>
<comment type="interaction">
    <interactant intactId="EBI-353467">
        <id>P09211</id>
    </interactant>
    <interactant intactId="EBI-625509">
        <id>Q8N720</id>
        <label>ZNF655</label>
    </interactant>
    <organismsDiffer>false</organismsDiffer>
    <experiments>3</experiments>
</comment>
<comment type="subcellular location">
    <subcellularLocation>
        <location evidence="8">Cytoplasm</location>
    </subcellularLocation>
    <subcellularLocation>
        <location evidence="8">Mitochondrion</location>
    </subcellularLocation>
    <subcellularLocation>
        <location evidence="8">Nucleus</location>
    </subcellularLocation>
    <text>The 83 N-terminal amino acids function as un uncleaved transit peptide, and arginine residues within it are crucial for mitochondrial localization.</text>
</comment>
<comment type="similarity">
    <text evidence="25">Belongs to the GST superfamily. Pi family.</text>
</comment>
<keyword id="KW-0002">3D-structure</keyword>
<keyword id="KW-0007">Acetylation</keyword>
<keyword id="KW-0963">Cytoplasm</keyword>
<keyword id="KW-0903">Direct protein sequencing</keyword>
<keyword id="KW-0443">Lipid metabolism</keyword>
<keyword id="KW-0496">Mitochondrion</keyword>
<keyword id="KW-0539">Nucleus</keyword>
<keyword id="KW-0597">Phosphoprotein</keyword>
<keyword id="KW-1267">Proteomics identification</keyword>
<keyword id="KW-1185">Reference proteome</keyword>
<keyword id="KW-0808">Transferase</keyword>
<evidence type="ECO:0000250" key="1">
    <source>
        <dbReference type="UniProtKB" id="P19157"/>
    </source>
</evidence>
<evidence type="ECO:0000269" key="2">
    <source>
    </source>
</evidence>
<evidence type="ECO:0000269" key="3">
    <source>
    </source>
</evidence>
<evidence type="ECO:0000269" key="4">
    <source>
    </source>
</evidence>
<evidence type="ECO:0000269" key="5">
    <source>
    </source>
</evidence>
<evidence type="ECO:0000269" key="6">
    <source>
    </source>
</evidence>
<evidence type="ECO:0000269" key="7">
    <source>
    </source>
</evidence>
<evidence type="ECO:0000269" key="8">
    <source>
    </source>
</evidence>
<evidence type="ECO:0000269" key="9">
    <source>
    </source>
</evidence>
<evidence type="ECO:0000269" key="10">
    <source>
    </source>
</evidence>
<evidence type="ECO:0000269" key="11">
    <source>
    </source>
</evidence>
<evidence type="ECO:0000269" key="12">
    <source>
    </source>
</evidence>
<evidence type="ECO:0000269" key="13">
    <source>
    </source>
</evidence>
<evidence type="ECO:0000269" key="14">
    <source>
    </source>
</evidence>
<evidence type="ECO:0000269" key="15">
    <source>
    </source>
</evidence>
<evidence type="ECO:0000269" key="16">
    <source>
    </source>
</evidence>
<evidence type="ECO:0000269" key="17">
    <source>
    </source>
</evidence>
<evidence type="ECO:0000269" key="18">
    <source>
    </source>
</evidence>
<evidence type="ECO:0000269" key="19">
    <source>
    </source>
</evidence>
<evidence type="ECO:0000269" key="20">
    <source>
    </source>
</evidence>
<evidence type="ECO:0000269" key="21">
    <source>
    </source>
</evidence>
<evidence type="ECO:0000269" key="22">
    <source>
    </source>
</evidence>
<evidence type="ECO:0000269" key="23">
    <source ref="15"/>
</evidence>
<evidence type="ECO:0000269" key="24">
    <source ref="9"/>
</evidence>
<evidence type="ECO:0000305" key="25"/>
<evidence type="ECO:0000305" key="26">
    <source>
    </source>
</evidence>
<evidence type="ECO:0000305" key="27">
    <source>
    </source>
</evidence>
<evidence type="ECO:0000312" key="28">
    <source>
        <dbReference type="HGNC" id="HGNC:4638"/>
    </source>
</evidence>
<evidence type="ECO:0007744" key="29">
    <source>
    </source>
</evidence>
<evidence type="ECO:0007744" key="30">
    <source>
    </source>
</evidence>
<evidence type="ECO:0007744" key="31">
    <source>
    </source>
</evidence>
<evidence type="ECO:0007829" key="32">
    <source>
        <dbReference type="PDB" id="3KMN"/>
    </source>
</evidence>
<evidence type="ECO:0007829" key="33">
    <source>
        <dbReference type="PDB" id="5J41"/>
    </source>
</evidence>
<evidence type="ECO:0007829" key="34">
    <source>
        <dbReference type="PDB" id="5JCW"/>
    </source>
</evidence>
<organism>
    <name type="scientific">Homo sapiens</name>
    <name type="common">Human</name>
    <dbReference type="NCBI Taxonomy" id="9606"/>
    <lineage>
        <taxon>Eukaryota</taxon>
        <taxon>Metazoa</taxon>
        <taxon>Chordata</taxon>
        <taxon>Craniata</taxon>
        <taxon>Vertebrata</taxon>
        <taxon>Euteleostomi</taxon>
        <taxon>Mammalia</taxon>
        <taxon>Eutheria</taxon>
        <taxon>Euarchontoglires</taxon>
        <taxon>Primates</taxon>
        <taxon>Haplorrhini</taxon>
        <taxon>Catarrhini</taxon>
        <taxon>Hominidae</taxon>
        <taxon>Homo</taxon>
    </lineage>
</organism>
<accession>P09211</accession>
<accession>O00460</accession>
<accession>Q15690</accession>
<accession>Q5TZY3</accession>
<protein>
    <recommendedName>
        <fullName evidence="25">Glutathione S-transferase P</fullName>
        <ecNumber evidence="4 6 16">2.5.1.18</ecNumber>
    </recommendedName>
    <alternativeName>
        <fullName>GST class-pi</fullName>
    </alternativeName>
    <alternativeName>
        <fullName>GSTP1-1</fullName>
    </alternativeName>
</protein>
<name>GSTP1_HUMAN</name>
<feature type="initiator methionine" description="Removed" evidence="2 13 14 15 23 30">
    <location>
        <position position="1"/>
    </location>
</feature>
<feature type="chain" id="PRO_0000185900" description="Glutathione S-transferase P">
    <location>
        <begin position="2"/>
        <end position="210"/>
    </location>
</feature>
<feature type="domain" description="GST N-terminal">
    <location>
        <begin position="2"/>
        <end position="81"/>
    </location>
</feature>
<feature type="domain" description="GST C-terminal">
    <location>
        <begin position="83"/>
        <end position="204"/>
    </location>
</feature>
<feature type="binding site" evidence="3 9 10 17 20 21 22">
    <location>
        <position position="8"/>
    </location>
    <ligand>
        <name>glutathione</name>
        <dbReference type="ChEBI" id="CHEBI:57925"/>
    </ligand>
</feature>
<feature type="binding site" evidence="3 9 10 17 20 21 22">
    <location>
        <position position="14"/>
    </location>
    <ligand>
        <name>glutathione</name>
        <dbReference type="ChEBI" id="CHEBI:57925"/>
    </ligand>
</feature>
<feature type="binding site" evidence="3 9 10 17 20 21 22">
    <location>
        <position position="39"/>
    </location>
    <ligand>
        <name>glutathione</name>
        <dbReference type="ChEBI" id="CHEBI:57925"/>
    </ligand>
</feature>
<feature type="binding site" evidence="3 9 10 17 20 21 22">
    <location>
        <position position="45"/>
    </location>
    <ligand>
        <name>glutathione</name>
        <dbReference type="ChEBI" id="CHEBI:57925"/>
    </ligand>
</feature>
<feature type="binding site" evidence="3 9 10 17 20 21 22">
    <location>
        <begin position="52"/>
        <end position="53"/>
    </location>
    <ligand>
        <name>glutathione</name>
        <dbReference type="ChEBI" id="CHEBI:57925"/>
    </ligand>
</feature>
<feature type="binding site" evidence="3 9 10 17 20 21 22">
    <location>
        <begin position="65"/>
        <end position="66"/>
    </location>
    <ligand>
        <name>glutathione</name>
        <dbReference type="ChEBI" id="CHEBI:57925"/>
    </ligand>
</feature>
<feature type="modified residue" description="Phosphotyrosine; by EGFR" evidence="7">
    <location>
        <position position="4"/>
    </location>
</feature>
<feature type="modified residue" description="Phosphothreonine" evidence="31">
    <location>
        <position position="62"/>
    </location>
</feature>
<feature type="modified residue" description="N6-succinyllysine" evidence="1">
    <location>
        <position position="103"/>
    </location>
</feature>
<feature type="modified residue" description="N6-succinyllysine" evidence="1">
    <location>
        <position position="116"/>
    </location>
</feature>
<feature type="modified residue" description="N6-acetyllysine" evidence="29">
    <location>
        <position position="128"/>
    </location>
</feature>
<feature type="modified residue" description="Phosphotyrosine; by EGFR" evidence="7">
    <location>
        <position position="199"/>
    </location>
</feature>
<feature type="sequence variant" id="VAR_014499" description="In allele GSTP1*B and allele GSTP1*C; dbSNP:rs1695." evidence="5 19 24">
    <original>I</original>
    <variation>V</variation>
    <location>
        <position position="105"/>
    </location>
</feature>
<feature type="sequence variant" id="VAR_014500" description="In allele GSTP1*C; dbSNP:rs1138272." evidence="19 24">
    <original>A</original>
    <variation>V</variation>
    <location>
        <position position="114"/>
    </location>
</feature>
<feature type="sequence variant" id="VAR_049493" description="In dbSNP:rs41462048.">
    <original>G</original>
    <variation>D</variation>
    <location>
        <position position="169"/>
    </location>
</feature>
<feature type="mutagenesis site" description="Reduces catalytic activity about 50-fold." evidence="4 6">
    <original>Y</original>
    <variation>F</variation>
    <location>
        <position position="8"/>
    </location>
</feature>
<feature type="mutagenesis site" description="Reduces affinity for glutathione. Slightly reduced catalytic activity." evidence="16">
    <original>D</original>
    <variation>A</variation>
    <location>
        <position position="99"/>
    </location>
</feature>
<feature type="sequence conflict" description="In Ref. 2; CAA30894." evidence="25" ref="2">
    <original>A</original>
    <variation>P</variation>
    <location>
        <position position="186"/>
    </location>
</feature>
<feature type="strand" evidence="33">
    <location>
        <begin position="4"/>
        <end position="8"/>
    </location>
</feature>
<feature type="strand" evidence="33">
    <location>
        <begin position="10"/>
        <end position="12"/>
    </location>
</feature>
<feature type="helix" evidence="33">
    <location>
        <begin position="13"/>
        <end position="15"/>
    </location>
</feature>
<feature type="helix" evidence="33">
    <location>
        <begin position="16"/>
        <end position="24"/>
    </location>
</feature>
<feature type="strand" evidence="33">
    <location>
        <begin position="29"/>
        <end position="33"/>
    </location>
</feature>
<feature type="helix" evidence="33">
    <location>
        <begin position="36"/>
        <end position="41"/>
    </location>
</feature>
<feature type="helix" evidence="33">
    <location>
        <begin position="43"/>
        <end position="47"/>
    </location>
</feature>
<feature type="strand" evidence="32">
    <location>
        <begin position="48"/>
        <end position="51"/>
    </location>
</feature>
<feature type="strand" evidence="33">
    <location>
        <begin position="55"/>
        <end position="58"/>
    </location>
</feature>
<feature type="strand" evidence="33">
    <location>
        <begin position="61"/>
        <end position="65"/>
    </location>
</feature>
<feature type="helix" evidence="33">
    <location>
        <begin position="66"/>
        <end position="77"/>
    </location>
</feature>
<feature type="helix" evidence="33">
    <location>
        <begin position="84"/>
        <end position="110"/>
    </location>
</feature>
<feature type="helix" evidence="33">
    <location>
        <begin position="112"/>
        <end position="135"/>
    </location>
</feature>
<feature type="helix" evidence="33">
    <location>
        <begin position="138"/>
        <end position="140"/>
    </location>
</feature>
<feature type="strand" evidence="34">
    <location>
        <begin position="144"/>
        <end position="148"/>
    </location>
</feature>
<feature type="helix" evidence="33">
    <location>
        <begin position="151"/>
        <end position="166"/>
    </location>
</feature>
<feature type="helix" evidence="33">
    <location>
        <begin position="170"/>
        <end position="173"/>
    </location>
</feature>
<feature type="helix" evidence="33">
    <location>
        <begin position="175"/>
        <end position="185"/>
    </location>
</feature>
<feature type="helix" evidence="33">
    <location>
        <begin position="188"/>
        <end position="195"/>
    </location>
</feature>
<feature type="helix" evidence="33">
    <location>
        <begin position="197"/>
        <end position="200"/>
    </location>
</feature>
<feature type="strand" evidence="33">
    <location>
        <begin position="204"/>
        <end position="208"/>
    </location>
</feature>
<proteinExistence type="evidence at protein level"/>
<gene>
    <name evidence="28" type="primary">GSTP1</name>
    <name type="synonym">FAEES3</name>
    <name type="synonym">GST3</name>
</gene>
<sequence length="210" mass="23356">MPPYTVVYFPVRGRCAALRMLLADQGQSWKEEVVTVETWQEGSLKASCLYGQLPKFQDGDLTLYQSNTILRHLGRTLGLYGKDQQEAALVDMVNDGVEDLRCKYISLIYTNYEAGKDDYVKALPGQLKPFETLLSQNQGGKTFIVGDQISFADYNLLDLLLIHEVLAPGCLDAFPLLSAYVGRLSARPKLKAFLASPEYVNLPINGNGKQ</sequence>
<reference key="1">
    <citation type="journal article" date="1987" name="Cancer Res.">
        <title>Structure and expression of a human class pi glutathione S-transferase messenger RNA.</title>
        <authorList>
            <person name="Kano T."/>
            <person name="Sakai M."/>
            <person name="Muramatsu M."/>
        </authorList>
    </citation>
    <scope>NUCLEOTIDE SEQUENCE [MRNA]</scope>
</reference>
<reference key="2">
    <citation type="journal article" date="1988" name="Biochem. J.">
        <title>The structure of the human glutathione S-transferase pi gene.</title>
        <authorList>
            <person name="Cowell I.G."/>
            <person name="Dixon K.H."/>
            <person name="Pemble S.E."/>
            <person name="Ketterer B."/>
            <person name="Taylor J.B."/>
        </authorList>
    </citation>
    <scope>NUCLEOTIDE SEQUENCE [GENOMIC DNA]</scope>
</reference>
<reference key="3">
    <citation type="journal article" date="1989" name="Gene">
        <title>Structure of the human genomic glutathione S-transferase-pi gene.</title>
        <authorList>
            <person name="Morrow C.S."/>
            <person name="Cowan K.H."/>
            <person name="Goldsmith M.E."/>
        </authorList>
    </citation>
    <scope>NUCLEOTIDE SEQUENCE [GENOMIC DNA]</scope>
</reference>
<reference key="4">
    <citation type="journal article" date="1989" name="Cancer Res.">
        <title>Expression of anionic glutathione-S-transferase and P-glycoprotein genes in human tissues and tumors.</title>
        <authorList>
            <person name="Moscow J.A."/>
            <person name="Fairchild C.R."/>
            <person name="Madden M.J."/>
            <person name="Ransom D.T."/>
            <person name="Wieand H.S."/>
            <person name="O'Brien E.E."/>
            <person name="Poplack D.G."/>
            <person name="Cossman J."/>
            <person name="Myers C.E."/>
            <person name="Cowan K.H."/>
        </authorList>
    </citation>
    <scope>NUCLEOTIDE SEQUENCE [MRNA]</scope>
</reference>
<reference key="5">
    <citation type="submission" date="1994-07" db="EMBL/GenBank/DDBJ databases">
        <title>Human fatty acid ethyl ester synthase III gene: genomic organization, nucleotide sequence, genetic and chromosomal sublocalization.</title>
        <authorList>
            <person name="Bora P.S."/>
            <person name="Smith C."/>
            <person name="Lange L.G."/>
            <person name="Bora N.S."/>
            <person name="Jones C."/>
            <person name="Gerhard D.S."/>
        </authorList>
    </citation>
    <scope>NUCLEOTIDE SEQUENCE [GENOMIC DNA]</scope>
</reference>
<reference key="6">
    <citation type="journal article" date="1997" name="J. Biol. Chem.">
        <title>Molecular cloning, characterization, and expression in Escherichia coli of full-length cDNAs of three human glutathione S-transferase Pi gene variants. Evidence for differential catalytic activity of the encoded proteins.</title>
        <authorList>
            <person name="Ali-Osman F."/>
            <person name="Akande O."/>
            <person name="Antoun G."/>
            <person name="Mao J.X."/>
            <person name="Buolamwini J."/>
        </authorList>
    </citation>
    <scope>NUCLEOTIDE SEQUENCE [MRNA]</scope>
    <scope>VARIANTS VAL-105 AND VAL-114</scope>
</reference>
<reference key="7">
    <citation type="submission" date="2004-10" db="EMBL/GenBank/DDBJ databases">
        <title>Cloning of human full-length CDSs in BD Creator(TM) system donor vector.</title>
        <authorList>
            <person name="Kalnine N."/>
            <person name="Chen X."/>
            <person name="Rolfs A."/>
            <person name="Halleck A."/>
            <person name="Hines L."/>
            <person name="Eisenstein S."/>
            <person name="Koundinya M."/>
            <person name="Raphael J."/>
            <person name="Moreira D."/>
            <person name="Kelley T."/>
            <person name="LaBaer J."/>
            <person name="Lin Y."/>
            <person name="Phelan M."/>
            <person name="Farmer A."/>
        </authorList>
    </citation>
    <scope>NUCLEOTIDE SEQUENCE [LARGE SCALE MRNA]</scope>
</reference>
<reference key="8">
    <citation type="submission" date="2004-05" db="EMBL/GenBank/DDBJ databases">
        <title>Cloning of human full open reading frames in Gateway(TM) system entry vector (pDONR201).</title>
        <authorList>
            <person name="Ebert L."/>
            <person name="Schick M."/>
            <person name="Neubert P."/>
            <person name="Schatten R."/>
            <person name="Henze S."/>
            <person name="Korn B."/>
        </authorList>
    </citation>
    <scope>NUCLEOTIDE SEQUENCE [LARGE SCALE MRNA]</scope>
</reference>
<reference key="9">
    <citation type="submission" date="2003-06" db="EMBL/GenBank/DDBJ databases">
        <authorList>
            <consortium name="NIEHS SNPs program"/>
        </authorList>
    </citation>
    <scope>NUCLEOTIDE SEQUENCE [GENOMIC DNA]</scope>
    <scope>VARIANTS VAL-105 AND VAL-114</scope>
</reference>
<reference key="10">
    <citation type="journal article" date="2004" name="Genome Res.">
        <title>The status, quality, and expansion of the NIH full-length cDNA project: the Mammalian Gene Collection (MGC).</title>
        <authorList>
            <consortium name="The MGC Project Team"/>
        </authorList>
    </citation>
    <scope>NUCLEOTIDE SEQUENCE [LARGE SCALE MRNA]</scope>
    <scope>VARIANT VAL-105</scope>
    <source>
        <tissue>Urinary bladder</tissue>
    </source>
</reference>
<reference key="11">
    <citation type="journal article" date="1985" name="FEBS Lett.">
        <title>Structural evidence for three different types of glutathione transferase in human tissues.</title>
        <authorList>
            <person name="Alin P."/>
            <person name="Mannervik B."/>
            <person name="Joernvall H."/>
        </authorList>
    </citation>
    <scope>PROTEIN SEQUENCE OF 2-24</scope>
</reference>
<reference key="12">
    <citation type="journal article" date="1985" name="Proc. Natl. Acad. Sci. U.S.A.">
        <title>Identification of three classes of cytosolic glutathione transferase common to several mammalian species: correlation between structural data and enzymatic properties.</title>
        <authorList>
            <person name="Mannervik B."/>
            <person name="Alin P."/>
            <person name="Guthenberg C."/>
            <person name="Jensson H."/>
            <person name="Tahir M.K."/>
            <person name="Warholm M."/>
            <person name="Joernvall H."/>
        </authorList>
    </citation>
    <scope>PROTEIN SEQUENCE OF 2-24</scope>
</reference>
<reference key="13">
    <citation type="journal article" date="1988" name="Arch. Biochem. Biophys.">
        <title>Purification and characterization of unique glutathione S-transferases from human muscle.</title>
        <authorList>
            <person name="Singh S.V."/>
            <person name="Ahmad H."/>
            <person name="Kurosky A."/>
            <person name="Awasthi Y.C."/>
        </authorList>
    </citation>
    <scope>PROTEIN SEQUENCE OF 2-14</scope>
</reference>
<reference key="14">
    <citation type="journal article" date="2003" name="Nat. Biotechnol.">
        <title>Exploring proteomes and analyzing protein processing by mass spectrometric identification of sorted N-terminal peptides.</title>
        <authorList>
            <person name="Gevaert K."/>
            <person name="Goethals M."/>
            <person name="Martens L."/>
            <person name="Van Damme J."/>
            <person name="Staes A."/>
            <person name="Thomas G.R."/>
            <person name="Vandekerckhove J."/>
        </authorList>
    </citation>
    <scope>PROTEIN SEQUENCE OF 2-12</scope>
    <source>
        <tissue>Platelet</tissue>
    </source>
</reference>
<reference key="15">
    <citation type="submission" date="2008-12" db="UniProtKB">
        <authorList>
            <person name="Lubec G."/>
            <person name="Vishwanath V."/>
            <person name="Chen W.-Q."/>
            <person name="Sun Y."/>
        </authorList>
    </citation>
    <scope>PROTEIN SEQUENCE OF 2-12; 20-71; 76-101; 104-141; 122-141 AND 192-209</scope>
    <scope>IDENTIFICATION BY MASS SPECTROMETRY</scope>
    <source>
        <tissue>Brain</tissue>
        <tissue>Cajal-Retzius cell</tissue>
        <tissue>Fetal brain cortex</tissue>
    </source>
</reference>
<reference key="16">
    <citation type="journal article" date="1997" name="Electrophoresis">
        <title>A two-dimensional gel database of human colon carcinoma proteins.</title>
        <authorList>
            <person name="Ji H."/>
            <person name="Reid G.E."/>
            <person name="Moritz R.L."/>
            <person name="Eddes J.S."/>
            <person name="Burgess A.W."/>
            <person name="Simpson R.J."/>
        </authorList>
    </citation>
    <scope>PARTIAL PROTEIN SEQUENCE</scope>
    <source>
        <tissue>Colon carcinoma</tissue>
    </source>
</reference>
<reference key="17">
    <citation type="journal article" date="1990" name="Arch. Biochem. Biophys.">
        <title>Primary and secondary structural analyses of glutathione S-transferase pi from human placenta.</title>
        <authorList>
            <person name="Ahmad H."/>
            <person name="Wilson D.E."/>
            <person name="Fritz R.R."/>
            <person name="Singh S.V."/>
            <person name="Medh R.D."/>
            <person name="Nagle G.T."/>
            <person name="Awasthi Y.C."/>
            <person name="Kurosky A."/>
        </authorList>
    </citation>
    <scope>PRIMARY AND SECONDARY STRUCTURAL ANALYSES</scope>
</reference>
<reference key="18">
    <citation type="journal article" date="1992" name="Biochem. Biophys. Res. Commun.">
        <title>Tyrosine-7 in human class Pi glutathione S-transferase is important for lowering the pKa of the thiol group of glutathione in the enzyme-glutathione complex.</title>
        <authorList>
            <person name="Kong K.H."/>
            <person name="Takasu K."/>
            <person name="Inoue H."/>
            <person name="Takahashi K."/>
        </authorList>
    </citation>
    <scope>CATALYTIC ACTIVITY</scope>
    <scope>MUTAGENESIS OF TYR-8</scope>
</reference>
<reference key="19">
    <citation type="journal article" date="1992" name="Biochem. Biophys. Res. Commun.">
        <title>Tyrosine-7 is an essential residue for the catalytic activity of human class PI glutathione S-transferase: chemical modification and site-directed mutagenesis studies.</title>
        <authorList>
            <person name="Kong K.H."/>
            <person name="Nishida M."/>
            <person name="Inoue H."/>
            <person name="Takahashi K."/>
        </authorList>
    </citation>
    <scope>CATALYTIC ACTIVITY</scope>
    <scope>MUTAGENESIS OF TYR-8</scope>
</reference>
<reference key="20">
    <citation type="journal article" date="1993" name="Protein Eng.">
        <title>Site-directed mutagenesis study on the roles of evolutionally conserved aspartic acid residues in human glutathione S-transferase P1-1.</title>
        <authorList>
            <person name="Kong K.-H."/>
            <person name="Inoue H."/>
            <person name="Takahashi K."/>
        </authorList>
    </citation>
    <scope>MUTAGENESIS OF ASP-99</scope>
    <scope>CATALYTIC ACTIVITY</scope>
</reference>
<reference key="21">
    <citation type="journal article" date="1997" name="Chem. Res. Toxicol.">
        <title>Stereoselective conjugation of prostaglandin A2 and prostaglandin J2 with glutathione, catalyzed by the human glutathione S-transferases A1-1, A2-2, M1a-1a, and P1-1.</title>
        <authorList>
            <person name="Bogaards J.J."/>
            <person name="Venekamp J.C."/>
            <person name="van Bladeren P.J."/>
        </authorList>
    </citation>
    <scope>CATALYTIC ACTIVITY</scope>
    <scope>FUNCTION</scope>
    <scope>BIOPHYSICOCHEMICAL PROPERTIES</scope>
</reference>
<reference key="22">
    <citation type="journal article" date="2009" name="Free Radic. Biol. Med.">
        <title>Glutathione S-transferase pi localizes in mitochondria and protects against oxidative stress.</title>
        <authorList>
            <person name="Goto S."/>
            <person name="Kawakatsu M."/>
            <person name="Izumi S."/>
            <person name="Urata Y."/>
            <person name="Kageyama K."/>
            <person name="Ihara Y."/>
            <person name="Koji T."/>
            <person name="Kondo T."/>
        </authorList>
    </citation>
    <scope>SUBCELLULAR LOCATION</scope>
</reference>
<reference key="23">
    <citation type="journal article" date="2009" name="J. Biol. Chem.">
        <title>Tyrosine phosphorylation of the human glutathione S-transferase P1 by epidermal growth factor receptor.</title>
        <authorList>
            <person name="Okamura T."/>
            <person name="Singh S."/>
            <person name="Buolamwini J."/>
            <person name="Haystead T."/>
            <person name="Friedman H."/>
            <person name="Bigner D."/>
            <person name="Ali-Osman F."/>
        </authorList>
    </citation>
    <scope>PHOSPHORYLATION AT TYR-4 AND TYR-199</scope>
</reference>
<reference key="24">
    <citation type="journal article" date="2009" name="Science">
        <title>Lysine acetylation targets protein complexes and co-regulates major cellular functions.</title>
        <authorList>
            <person name="Choudhary C."/>
            <person name="Kumar C."/>
            <person name="Gnad F."/>
            <person name="Nielsen M.L."/>
            <person name="Rehman M."/>
            <person name="Walther T.C."/>
            <person name="Olsen J.V."/>
            <person name="Mann M."/>
        </authorList>
    </citation>
    <scope>ACETYLATION [LARGE SCALE ANALYSIS] AT LYS-128</scope>
    <scope>IDENTIFICATION BY MASS SPECTROMETRY [LARGE SCALE ANALYSIS]</scope>
</reference>
<reference key="25">
    <citation type="journal article" date="2011" name="BMC Syst. Biol.">
        <title>Initial characterization of the human central proteome.</title>
        <authorList>
            <person name="Burkard T.R."/>
            <person name="Planyavsky M."/>
            <person name="Kaupe I."/>
            <person name="Breitwieser F.P."/>
            <person name="Buerckstuemmer T."/>
            <person name="Bennett K.L."/>
            <person name="Superti-Furga G."/>
            <person name="Colinge J."/>
        </authorList>
    </citation>
    <scope>IDENTIFICATION BY MASS SPECTROMETRY [LARGE SCALE ANALYSIS]</scope>
</reference>
<reference key="26">
    <citation type="journal article" date="2011" name="Lipids">
        <title>Biosynthesis of 14,15-hepoxilins in human l1236 Hodgkin lymphoma cells and eosinophils.</title>
        <authorList>
            <person name="Brunnstroem A."/>
            <person name="Hamberg M."/>
            <person name="Griffiths W.J."/>
            <person name="Mannervik B."/>
            <person name="Claesson H.E."/>
        </authorList>
    </citation>
    <scope>CATALYTIC ACTIVITY</scope>
</reference>
<reference key="27">
    <citation type="journal article" date="2011" name="J. Neurochem.">
        <title>Glutathione-S-transferase P1 is a critical regulator of Cdk5 kinase activity.</title>
        <authorList>
            <person name="Sun K.H."/>
            <person name="Chang K.H."/>
            <person name="Clawson S."/>
            <person name="Ghosh S."/>
            <person name="Mirzaei H."/>
            <person name="Regnier F."/>
            <person name="Shah K."/>
        </authorList>
    </citation>
    <scope>FUNCTION</scope>
    <scope>INTERACTION WITH CDK5</scope>
</reference>
<reference key="28">
    <citation type="journal article" date="2012" name="Mol. Cell. Proteomics">
        <title>Comparative large-scale characterisation of plant vs. mammal proteins reveals similar and idiosyncratic N-alpha acetylation features.</title>
        <authorList>
            <person name="Bienvenut W.V."/>
            <person name="Sumpton D."/>
            <person name="Martinez A."/>
            <person name="Lilla S."/>
            <person name="Espagne C."/>
            <person name="Meinnel T."/>
            <person name="Giglione C."/>
        </authorList>
    </citation>
    <scope>CLEAVAGE OF INITIATOR METHIONINE [LARGE SCALE ANALYSIS]</scope>
    <scope>IDENTIFICATION BY MASS SPECTROMETRY [LARGE SCALE ANALYSIS]</scope>
</reference>
<reference key="29">
    <citation type="journal article" date="2012" name="Proc. Natl. Acad. Sci. U.S.A.">
        <title>N-terminal acetylome analyses and functional insights of the N-terminal acetyltransferase NatB.</title>
        <authorList>
            <person name="Van Damme P."/>
            <person name="Lasa M."/>
            <person name="Polevoda B."/>
            <person name="Gazquez C."/>
            <person name="Elosegui-Artola A."/>
            <person name="Kim D.S."/>
            <person name="De Juan-Pardo E."/>
            <person name="Demeyer K."/>
            <person name="Hole K."/>
            <person name="Larrea E."/>
            <person name="Timmerman E."/>
            <person name="Prieto J."/>
            <person name="Arnesen T."/>
            <person name="Sherman F."/>
            <person name="Gevaert K."/>
            <person name="Aldabe R."/>
        </authorList>
    </citation>
    <scope>IDENTIFICATION BY MASS SPECTROMETRY [LARGE SCALE ANALYSIS]</scope>
</reference>
<reference key="30">
    <citation type="journal article" date="2013" name="J. Proteome Res.">
        <title>Toward a comprehensive characterization of a human cancer cell phosphoproteome.</title>
        <authorList>
            <person name="Zhou H."/>
            <person name="Di Palma S."/>
            <person name="Preisinger C."/>
            <person name="Peng M."/>
            <person name="Polat A.N."/>
            <person name="Heck A.J."/>
            <person name="Mohammed S."/>
        </authorList>
    </citation>
    <scope>PHOSPHORYLATION [LARGE SCALE ANALYSIS] AT THR-62</scope>
    <scope>IDENTIFICATION BY MASS SPECTROMETRY [LARGE SCALE ANALYSIS]</scope>
    <source>
        <tissue>Erythroleukemia</tissue>
    </source>
</reference>
<reference key="31">
    <citation type="journal article" date="2014" name="J. Proteomics">
        <title>An enzyme assisted RP-RPLC approach for in-depth analysis of human liver phosphoproteome.</title>
        <authorList>
            <person name="Bian Y."/>
            <person name="Song C."/>
            <person name="Cheng K."/>
            <person name="Dong M."/>
            <person name="Wang F."/>
            <person name="Huang J."/>
            <person name="Sun D."/>
            <person name="Wang L."/>
            <person name="Ye M."/>
            <person name="Zou H."/>
        </authorList>
    </citation>
    <scope>IDENTIFICATION BY MASS SPECTROMETRY [LARGE SCALE ANALYSIS]</scope>
    <source>
        <tissue>Liver</tissue>
    </source>
</reference>
<reference key="32">
    <citation type="journal article" date="2015" name="Proteomics">
        <title>N-terminome analysis of the human mitochondrial proteome.</title>
        <authorList>
            <person name="Vaca Jacome A.S."/>
            <person name="Rabilloud T."/>
            <person name="Schaeffer-Reiss C."/>
            <person name="Rompais M."/>
            <person name="Ayoub D."/>
            <person name="Lane L."/>
            <person name="Bairoch A."/>
            <person name="Van Dorsselaer A."/>
            <person name="Carapito C."/>
        </authorList>
    </citation>
    <scope>IDENTIFICATION BY MASS SPECTROMETRY [LARGE SCALE ANALYSIS]</scope>
</reference>
<reference key="33">
    <citation type="journal article" date="1992" name="J. Mol. Biol.">
        <title>Three-dimensional structure of class pi glutathione S-transferase from human placenta in complex with S-hexylglutathione at 2.8-A resolution.</title>
        <authorList>
            <person name="Reinemer P."/>
            <person name="Dirr H.W."/>
            <person name="Ladenstein R."/>
            <person name="Huber R."/>
            <person name="Lo Bello M."/>
            <person name="Federici G."/>
            <person name="Parker M.W."/>
        </authorList>
    </citation>
    <scope>X-RAY CRYSTALLOGRAPHY (2.8 ANGSTROMS) COMPLEX WITH S-HEXYLGLUTATHIONE</scope>
</reference>
<reference key="34">
    <citation type="journal article" date="1997" name="Biochemistry">
        <title>The three-dimensional structure of the human Pi class glutathione transferase P1-1 in complex with the inhibitor ethacrynic acid and its glutathione conjugate.</title>
        <authorList>
            <person name="Oakley A.J."/>
            <person name="Rossjohn J."/>
            <person name="Lo Bello M."/>
            <person name="Caccuri A.M."/>
            <person name="Federici G."/>
            <person name="Parker M.W."/>
        </authorList>
    </citation>
    <scope>X-RAY CRYSTALLOGRAPHY (1.9 ANGSTROMS) IN COMPLEX WITH THE INHIBITOR ETHACRYNIC ACID AND GLUTATHIONE</scope>
</reference>
<reference key="35">
    <citation type="journal article" date="1997" name="Biochemistry">
        <title>Structure and function of the xenobiotic substrate-binding site and location of a potential non-substrate-binding site in a class pi glutathione S-transferase.</title>
        <authorList>
            <person name="Ji X."/>
            <person name="Tordova M."/>
            <person name="O'Donnell R."/>
            <person name="Parsons J.F."/>
            <person name="Hayden J.B."/>
            <person name="Gilliland G.L."/>
            <person name="Zimniak P."/>
        </authorList>
    </citation>
    <scope>X-RAY CRYSTALLOGRAPHY (1.8 ANGSTROMS) IN COMPLEXES WITH GLUTATHIONE AND INHIBITOR</scope>
</reference>
<reference key="36">
    <citation type="journal article" date="1997" name="J. Mol. Biol.">
        <title>The structures of human glutathione transferase P1-1 in complex with glutathione and various inhibitors at high resolution.</title>
        <authorList>
            <person name="Oakley A.J."/>
            <person name="Lo Bello M."/>
            <person name="Battistoni A."/>
            <person name="Ricci G."/>
            <person name="Rossjohn J."/>
            <person name="Villar H.O."/>
            <person name="Parker M.W."/>
        </authorList>
    </citation>
    <scope>X-RAY CRYSTALLOGRAPHY (1.9 ANGSTROMS) IN COMPLEXES WITH GLUTATHIONE</scope>
</reference>
<reference key="37">
    <citation type="journal article" date="1997" name="Structure">
        <title>Structures of class pi glutathione S-transferase from human placenta in complex with substrate, transition-state analogue and inhibitor.</title>
        <authorList>
            <person name="Prade L."/>
            <person name="Huber R."/>
            <person name="Manoharan T.H."/>
            <person name="Fahl W.E."/>
            <person name="Reuter W."/>
        </authorList>
    </citation>
    <scope>X-RAY CRYSTALLOGRAPHY (1.8 ANGSTROMS) IN COMPLEX WITH GLUTATHIONE</scope>
</reference>
<reference key="38">
    <citation type="journal article" date="1999" name="Biochemistry">
        <title>Structure and function of residue 104 and water molecules in the xenobiotic substrate-binding site in human glutathione S-transferase P1-1.</title>
        <authorList>
            <person name="Ji X."/>
            <person name="Blaszczyk J."/>
            <person name="Xiao B."/>
            <person name="O'Donnell R."/>
            <person name="Hu X."/>
            <person name="Herzog C."/>
            <person name="Singh S.V."/>
            <person name="Zimniak P."/>
        </authorList>
    </citation>
    <scope>X-RAY CRYSTALLOGRAPHY (2.1 ANGSTROMS)</scope>
</reference>
<reference key="39">
    <citation type="journal article" date="1998" name="Biochemistry">
        <title>Solution structure of glutathione bound to human glutathione transferase P1-1: comparison of NMR measurements with the crystal structure.</title>
        <authorList>
            <person name="Nicotra M."/>
            <person name="Paci M."/>
            <person name="Sette M."/>
            <person name="Oakley A.J."/>
            <person name="Parker M.W."/>
            <person name="Lo Bello M."/>
            <person name="Caccuri A.M."/>
            <person name="Federici G."/>
            <person name="Ricci G."/>
        </authorList>
    </citation>
    <scope>STRUCTURE BY NMR</scope>
</reference>
<reference key="40">
    <citation type="journal article" date="2009" name="Angew. Chem. Int. Ed.">
        <title>Rational design of an organometallic glutathione transferase inhibitor.</title>
        <authorList>
            <person name="Ang W.H."/>
            <person name="Parker L.J."/>
            <person name="De Luca A."/>
            <person name="Juillerat-Jeanneret L."/>
            <person name="Morton C.J."/>
            <person name="Lo Bello M."/>
            <person name="Parker M.W."/>
            <person name="Dyson P.J."/>
        </authorList>
    </citation>
    <scope>X-RAY CRYSTALLOGRAPHY (1.6 ANGSTROMS) IN COMPLEX WITH GLUTATHIONE</scope>
</reference>
<reference key="41">
    <citation type="journal article" date="2009" name="Cancer Res.">
        <title>Structural basis for the binding of the anticancer compound 6-(7-nitro-2,1,3-benzoxadiazol-4-ylthio)hexanol to human glutathione s-transferases.</title>
        <authorList>
            <person name="Federici L."/>
            <person name="Lo Sterzo C."/>
            <person name="Pezzola S."/>
            <person name="Di Matteo A."/>
            <person name="Scaloni F."/>
            <person name="Federici G."/>
            <person name="Caccuri A.M."/>
        </authorList>
    </citation>
    <scope>X-RAY CRYSTALLOGRAPHY (1.53 ANGSTROMS) OF 2-210 IN COMPLEX WITH GLUTATHIONE</scope>
</reference>
<dbReference type="EC" id="2.5.1.18" evidence="4 6 16"/>
<dbReference type="EMBL" id="X06547">
    <property type="protein sequence ID" value="CAA29794.1"/>
    <property type="molecule type" value="mRNA"/>
</dbReference>
<dbReference type="EMBL" id="M24485">
    <property type="protein sequence ID" value="AAA56823.1"/>
    <property type="molecule type" value="Genomic_DNA"/>
</dbReference>
<dbReference type="EMBL" id="X08058">
    <property type="protein sequence ID" value="CAA30847.1"/>
    <property type="molecule type" value="Genomic_DNA"/>
</dbReference>
<dbReference type="EMBL" id="X08094">
    <property type="protein sequence ID" value="CAA30894.1"/>
    <property type="molecule type" value="Genomic_DNA"/>
</dbReference>
<dbReference type="EMBL" id="X08095">
    <property type="protein sequence ID" value="CAA30894.1"/>
    <property type="status" value="JOINED"/>
    <property type="molecule type" value="Genomic_DNA"/>
</dbReference>
<dbReference type="EMBL" id="X08096">
    <property type="protein sequence ID" value="CAA30894.1"/>
    <property type="status" value="JOINED"/>
    <property type="molecule type" value="Genomic_DNA"/>
</dbReference>
<dbReference type="EMBL" id="X15480">
    <property type="protein sequence ID" value="CAA33508.1"/>
    <property type="molecule type" value="mRNA"/>
</dbReference>
<dbReference type="EMBL" id="U12472">
    <property type="protein sequence ID" value="AAA64919.1"/>
    <property type="molecule type" value="Genomic_DNA"/>
</dbReference>
<dbReference type="EMBL" id="U30897">
    <property type="protein sequence ID" value="AAC51280.1"/>
    <property type="molecule type" value="mRNA"/>
</dbReference>
<dbReference type="EMBL" id="U62589">
    <property type="protein sequence ID" value="AAC51237.1"/>
    <property type="molecule type" value="mRNA"/>
</dbReference>
<dbReference type="EMBL" id="U21689">
    <property type="protein sequence ID" value="AAC13869.1"/>
    <property type="molecule type" value="Genomic_DNA"/>
</dbReference>
<dbReference type="EMBL" id="BT019949">
    <property type="protein sequence ID" value="AAV38752.1"/>
    <property type="molecule type" value="mRNA"/>
</dbReference>
<dbReference type="EMBL" id="BT019950">
    <property type="protein sequence ID" value="AAV38753.1"/>
    <property type="molecule type" value="mRNA"/>
</dbReference>
<dbReference type="EMBL" id="CR450361">
    <property type="protein sequence ID" value="CAG29357.1"/>
    <property type="molecule type" value="mRNA"/>
</dbReference>
<dbReference type="EMBL" id="AY324387">
    <property type="protein sequence ID" value="AAP72967.1"/>
    <property type="molecule type" value="Genomic_DNA"/>
</dbReference>
<dbReference type="EMBL" id="BC010915">
    <property type="protein sequence ID" value="AAH10915.1"/>
    <property type="molecule type" value="mRNA"/>
</dbReference>
<dbReference type="CCDS" id="CCDS41679.1"/>
<dbReference type="PIR" id="A41177">
    <property type="entry name" value="A41177"/>
</dbReference>
<dbReference type="PIR" id="JS0153">
    <property type="entry name" value="A37378"/>
</dbReference>
<dbReference type="RefSeq" id="NP_000843.1">
    <property type="nucleotide sequence ID" value="NM_000852.4"/>
</dbReference>
<dbReference type="PDB" id="10GS">
    <property type="method" value="X-ray"/>
    <property type="resolution" value="2.20 A"/>
    <property type="chains" value="A/B=2-210"/>
</dbReference>
<dbReference type="PDB" id="11GS">
    <property type="method" value="X-ray"/>
    <property type="resolution" value="2.30 A"/>
    <property type="chains" value="A/B=1-210"/>
</dbReference>
<dbReference type="PDB" id="12GS">
    <property type="method" value="X-ray"/>
    <property type="resolution" value="2.10 A"/>
    <property type="chains" value="A/B=1-210"/>
</dbReference>
<dbReference type="PDB" id="13GS">
    <property type="method" value="X-ray"/>
    <property type="resolution" value="1.90 A"/>
    <property type="chains" value="A/B=1-210"/>
</dbReference>
<dbReference type="PDB" id="14GS">
    <property type="method" value="X-ray"/>
    <property type="resolution" value="2.80 A"/>
    <property type="chains" value="A/B=1-210"/>
</dbReference>
<dbReference type="PDB" id="16GS">
    <property type="method" value="X-ray"/>
    <property type="resolution" value="1.90 A"/>
    <property type="chains" value="A/B=1-210"/>
</dbReference>
<dbReference type="PDB" id="17GS">
    <property type="method" value="X-ray"/>
    <property type="resolution" value="1.90 A"/>
    <property type="chains" value="A/B=1-210"/>
</dbReference>
<dbReference type="PDB" id="18GS">
    <property type="method" value="X-ray"/>
    <property type="resolution" value="1.90 A"/>
    <property type="chains" value="A/B=1-210"/>
</dbReference>
<dbReference type="PDB" id="19GS">
    <property type="method" value="X-ray"/>
    <property type="resolution" value="1.90 A"/>
    <property type="chains" value="A/B=2-210"/>
</dbReference>
<dbReference type="PDB" id="1AQV">
    <property type="method" value="X-ray"/>
    <property type="resolution" value="1.94 A"/>
    <property type="chains" value="A/B=2-210"/>
</dbReference>
<dbReference type="PDB" id="1AQW">
    <property type="method" value="X-ray"/>
    <property type="resolution" value="1.80 A"/>
    <property type="chains" value="A/B/C/D=2-210"/>
</dbReference>
<dbReference type="PDB" id="1AQX">
    <property type="method" value="X-ray"/>
    <property type="resolution" value="2.00 A"/>
    <property type="chains" value="A/B/C/D=2-210"/>
</dbReference>
<dbReference type="PDB" id="1EOG">
    <property type="method" value="X-ray"/>
    <property type="resolution" value="2.10 A"/>
    <property type="chains" value="A/B=3-210"/>
</dbReference>
<dbReference type="PDB" id="1EOH">
    <property type="method" value="X-ray"/>
    <property type="resolution" value="2.50 A"/>
    <property type="chains" value="A/B/C/D/E/F/G/H=2-210"/>
</dbReference>
<dbReference type="PDB" id="1GSS">
    <property type="method" value="X-ray"/>
    <property type="resolution" value="2.80 A"/>
    <property type="chains" value="A/B=2-210"/>
</dbReference>
<dbReference type="PDB" id="1KBN">
    <property type="method" value="X-ray"/>
    <property type="resolution" value="2.00 A"/>
    <property type="chains" value="A/B=2-210"/>
</dbReference>
<dbReference type="PDB" id="1LBK">
    <property type="method" value="X-ray"/>
    <property type="resolution" value="1.86 A"/>
    <property type="chains" value="A/B=2-203"/>
</dbReference>
<dbReference type="PDB" id="1MD3">
    <property type="method" value="X-ray"/>
    <property type="resolution" value="2.03 A"/>
    <property type="chains" value="A/B=2-210"/>
</dbReference>
<dbReference type="PDB" id="1MD4">
    <property type="method" value="X-ray"/>
    <property type="resolution" value="2.10 A"/>
    <property type="chains" value="A/B=2-210"/>
</dbReference>
<dbReference type="PDB" id="1PGT">
    <property type="method" value="X-ray"/>
    <property type="resolution" value="1.80 A"/>
    <property type="chains" value="A/B=1-210"/>
</dbReference>
<dbReference type="PDB" id="1PX6">
    <property type="method" value="X-ray"/>
    <property type="resolution" value="2.10 A"/>
    <property type="chains" value="A/B=2-210"/>
</dbReference>
<dbReference type="PDB" id="1PX7">
    <property type="method" value="X-ray"/>
    <property type="resolution" value="2.03 A"/>
    <property type="chains" value="A/B=2-210"/>
</dbReference>
<dbReference type="PDB" id="1ZGN">
    <property type="method" value="X-ray"/>
    <property type="resolution" value="2.10 A"/>
    <property type="chains" value="A/B=2-210"/>
</dbReference>
<dbReference type="PDB" id="20GS">
    <property type="method" value="X-ray"/>
    <property type="resolution" value="2.45 A"/>
    <property type="chains" value="A/B=2-210"/>
</dbReference>
<dbReference type="PDB" id="22GS">
    <property type="method" value="X-ray"/>
    <property type="resolution" value="1.90 A"/>
    <property type="chains" value="A/B=1-210"/>
</dbReference>
<dbReference type="PDB" id="2A2R">
    <property type="method" value="X-ray"/>
    <property type="resolution" value="1.40 A"/>
    <property type="chains" value="A/B=1-210"/>
</dbReference>
<dbReference type="PDB" id="2A2S">
    <property type="method" value="X-ray"/>
    <property type="resolution" value="1.70 A"/>
    <property type="chains" value="A/B=1-210"/>
</dbReference>
<dbReference type="PDB" id="2GSS">
    <property type="method" value="X-ray"/>
    <property type="resolution" value="1.90 A"/>
    <property type="chains" value="A/B=2-210"/>
</dbReference>
<dbReference type="PDB" id="2J9H">
    <property type="method" value="X-ray"/>
    <property type="resolution" value="2.40 A"/>
    <property type="chains" value="A/B=2-210"/>
</dbReference>
<dbReference type="PDB" id="2PGT">
    <property type="method" value="X-ray"/>
    <property type="resolution" value="1.90 A"/>
    <property type="chains" value="A/B=1-210"/>
</dbReference>
<dbReference type="PDB" id="3CSH">
    <property type="method" value="X-ray"/>
    <property type="resolution" value="1.55 A"/>
    <property type="chains" value="A/B=2-210"/>
</dbReference>
<dbReference type="PDB" id="3CSI">
    <property type="method" value="X-ray"/>
    <property type="resolution" value="1.90 A"/>
    <property type="chains" value="A/B/C/D=2-210"/>
</dbReference>
<dbReference type="PDB" id="3CSJ">
    <property type="method" value="X-ray"/>
    <property type="resolution" value="1.90 A"/>
    <property type="chains" value="A/B=2-210"/>
</dbReference>
<dbReference type="PDB" id="3DD3">
    <property type="method" value="X-ray"/>
    <property type="resolution" value="2.25 A"/>
    <property type="chains" value="A/B=1-210"/>
</dbReference>
<dbReference type="PDB" id="3DGQ">
    <property type="method" value="X-ray"/>
    <property type="resolution" value="1.60 A"/>
    <property type="chains" value="A/B=1-210"/>
</dbReference>
<dbReference type="PDB" id="3GSS">
    <property type="method" value="X-ray"/>
    <property type="resolution" value="1.90 A"/>
    <property type="chains" value="A/B=2-210"/>
</dbReference>
<dbReference type="PDB" id="3GUS">
    <property type="method" value="X-ray"/>
    <property type="resolution" value="1.53 A"/>
    <property type="chains" value="A/B=2-210"/>
</dbReference>
<dbReference type="PDB" id="3HJM">
    <property type="method" value="X-ray"/>
    <property type="resolution" value="2.10 A"/>
    <property type="chains" value="A/B/C/D=2-210"/>
</dbReference>
<dbReference type="PDB" id="3HJO">
    <property type="method" value="X-ray"/>
    <property type="resolution" value="1.95 A"/>
    <property type="chains" value="A/B=2-210"/>
</dbReference>
<dbReference type="PDB" id="3HKR">
    <property type="method" value="X-ray"/>
    <property type="resolution" value="1.80 A"/>
    <property type="chains" value="A/B=2-210"/>
</dbReference>
<dbReference type="PDB" id="3IE3">
    <property type="method" value="X-ray"/>
    <property type="resolution" value="1.80 A"/>
    <property type="chains" value="A/B=2-210"/>
</dbReference>
<dbReference type="PDB" id="3KM6">
    <property type="method" value="X-ray"/>
    <property type="resolution" value="2.10 A"/>
    <property type="chains" value="A/B=2-210"/>
</dbReference>
<dbReference type="PDB" id="3KMN">
    <property type="method" value="X-ray"/>
    <property type="resolution" value="1.80 A"/>
    <property type="chains" value="A/B=2-210"/>
</dbReference>
<dbReference type="PDB" id="3KMO">
    <property type="method" value="X-ray"/>
    <property type="resolution" value="2.60 A"/>
    <property type="chains" value="A/B=2-210"/>
</dbReference>
<dbReference type="PDB" id="3N9J">
    <property type="method" value="X-ray"/>
    <property type="resolution" value="1.85 A"/>
    <property type="chains" value="A/B=1-210"/>
</dbReference>
<dbReference type="PDB" id="3PGT">
    <property type="method" value="X-ray"/>
    <property type="resolution" value="2.14 A"/>
    <property type="chains" value="A/B=1-210"/>
</dbReference>
<dbReference type="PDB" id="4GSS">
    <property type="method" value="X-ray"/>
    <property type="resolution" value="2.50 A"/>
    <property type="chains" value="A/B=2-210"/>
</dbReference>
<dbReference type="PDB" id="4PGT">
    <property type="method" value="X-ray"/>
    <property type="resolution" value="2.10 A"/>
    <property type="chains" value="A/B=1-210"/>
</dbReference>
<dbReference type="PDB" id="5DAK">
    <property type="method" value="X-ray"/>
    <property type="resolution" value="2.11 A"/>
    <property type="chains" value="A/B=1-210"/>
</dbReference>
<dbReference type="PDB" id="5DAL">
    <property type="method" value="X-ray"/>
    <property type="resolution" value="1.50 A"/>
    <property type="chains" value="A/B=1-210"/>
</dbReference>
<dbReference type="PDB" id="5DCG">
    <property type="method" value="X-ray"/>
    <property type="resolution" value="2.01 A"/>
    <property type="chains" value="A/B=1-210"/>
</dbReference>
<dbReference type="PDB" id="5DDL">
    <property type="method" value="X-ray"/>
    <property type="resolution" value="1.98 A"/>
    <property type="chains" value="A/B=1-210"/>
</dbReference>
<dbReference type="PDB" id="5DJL">
    <property type="method" value="X-ray"/>
    <property type="resolution" value="1.80 A"/>
    <property type="chains" value="A/B=1-210"/>
</dbReference>
<dbReference type="PDB" id="5DJM">
    <property type="method" value="X-ray"/>
    <property type="resolution" value="1.90 A"/>
    <property type="chains" value="A/B=1-210"/>
</dbReference>
<dbReference type="PDB" id="5GSS">
    <property type="method" value="X-ray"/>
    <property type="resolution" value="1.95 A"/>
    <property type="chains" value="A/B=2-210"/>
</dbReference>
<dbReference type="PDB" id="5J41">
    <property type="method" value="X-ray"/>
    <property type="resolution" value="1.19 A"/>
    <property type="chains" value="A/B=2-210"/>
</dbReference>
<dbReference type="PDB" id="5JCW">
    <property type="method" value="X-ray"/>
    <property type="resolution" value="1.95 A"/>
    <property type="chains" value="A/B=1-210"/>
</dbReference>
<dbReference type="PDB" id="5L6X">
    <property type="method" value="X-ray"/>
    <property type="resolution" value="2.00 A"/>
    <property type="chains" value="A/B=1-210"/>
</dbReference>
<dbReference type="PDB" id="5X79">
    <property type="method" value="X-ray"/>
    <property type="resolution" value="1.90 A"/>
    <property type="chains" value="A/B=1-210"/>
</dbReference>
<dbReference type="PDB" id="6AP9">
    <property type="method" value="X-ray"/>
    <property type="resolution" value="1.55 A"/>
    <property type="chains" value="A/B=1-210"/>
</dbReference>
<dbReference type="PDB" id="6GSS">
    <property type="method" value="X-ray"/>
    <property type="resolution" value="1.90 A"/>
    <property type="chains" value="A/B=2-210"/>
</dbReference>
<dbReference type="PDB" id="6LLX">
    <property type="method" value="X-ray"/>
    <property type="resolution" value="1.58 A"/>
    <property type="chains" value="A/B=1-210"/>
</dbReference>
<dbReference type="PDB" id="6Y1E">
    <property type="method" value="X-ray"/>
    <property type="resolution" value="1.40 A"/>
    <property type="chains" value="A/B/C/D=1-210"/>
</dbReference>
<dbReference type="PDB" id="7BIA">
    <property type="method" value="X-ray"/>
    <property type="resolution" value="1.73 A"/>
    <property type="chains" value="A/B=1-210"/>
</dbReference>
<dbReference type="PDB" id="7GSS">
    <property type="method" value="X-ray"/>
    <property type="resolution" value="2.20 A"/>
    <property type="chains" value="A/B=2-210"/>
</dbReference>
<dbReference type="PDB" id="7XBA">
    <property type="method" value="X-ray"/>
    <property type="resolution" value="2.83 A"/>
    <property type="chains" value="A/B=2-210"/>
</dbReference>
<dbReference type="PDB" id="8GSS">
    <property type="method" value="X-ray"/>
    <property type="resolution" value="1.90 A"/>
    <property type="chains" value="A/B/C=2-210"/>
</dbReference>
<dbReference type="PDB" id="9GSS">
    <property type="method" value="X-ray"/>
    <property type="resolution" value="1.97 A"/>
    <property type="chains" value="A/B=2-210"/>
</dbReference>
<dbReference type="PDBsum" id="10GS"/>
<dbReference type="PDBsum" id="11GS"/>
<dbReference type="PDBsum" id="12GS"/>
<dbReference type="PDBsum" id="13GS"/>
<dbReference type="PDBsum" id="14GS"/>
<dbReference type="PDBsum" id="16GS"/>
<dbReference type="PDBsum" id="17GS"/>
<dbReference type="PDBsum" id="18GS"/>
<dbReference type="PDBsum" id="19GS"/>
<dbReference type="PDBsum" id="1AQV"/>
<dbReference type="PDBsum" id="1AQW"/>
<dbReference type="PDBsum" id="1AQX"/>
<dbReference type="PDBsum" id="1EOG"/>
<dbReference type="PDBsum" id="1EOH"/>
<dbReference type="PDBsum" id="1GSS"/>
<dbReference type="PDBsum" id="1KBN"/>
<dbReference type="PDBsum" id="1LBK"/>
<dbReference type="PDBsum" id="1MD3"/>
<dbReference type="PDBsum" id="1MD4"/>
<dbReference type="PDBsum" id="1PGT"/>
<dbReference type="PDBsum" id="1PX6"/>
<dbReference type="PDBsum" id="1PX7"/>
<dbReference type="PDBsum" id="1ZGN"/>
<dbReference type="PDBsum" id="20GS"/>
<dbReference type="PDBsum" id="22GS"/>
<dbReference type="PDBsum" id="2A2R"/>
<dbReference type="PDBsum" id="2A2S"/>
<dbReference type="PDBsum" id="2GSS"/>
<dbReference type="PDBsum" id="2J9H"/>
<dbReference type="PDBsum" id="2PGT"/>
<dbReference type="PDBsum" id="3CSH"/>
<dbReference type="PDBsum" id="3CSI"/>
<dbReference type="PDBsum" id="3CSJ"/>
<dbReference type="PDBsum" id="3DD3"/>
<dbReference type="PDBsum" id="3DGQ"/>
<dbReference type="PDBsum" id="3GSS"/>
<dbReference type="PDBsum" id="3GUS"/>
<dbReference type="PDBsum" id="3HJM"/>
<dbReference type="PDBsum" id="3HJO"/>
<dbReference type="PDBsum" id="3HKR"/>
<dbReference type="PDBsum" id="3IE3"/>
<dbReference type="PDBsum" id="3KM6"/>
<dbReference type="PDBsum" id="3KMN"/>
<dbReference type="PDBsum" id="3KMO"/>
<dbReference type="PDBsum" id="3N9J"/>
<dbReference type="PDBsum" id="3PGT"/>
<dbReference type="PDBsum" id="4GSS"/>
<dbReference type="PDBsum" id="4PGT"/>
<dbReference type="PDBsum" id="5DAK"/>
<dbReference type="PDBsum" id="5DAL"/>
<dbReference type="PDBsum" id="5DCG"/>
<dbReference type="PDBsum" id="5DDL"/>
<dbReference type="PDBsum" id="5DJL"/>
<dbReference type="PDBsum" id="5DJM"/>
<dbReference type="PDBsum" id="5GSS"/>
<dbReference type="PDBsum" id="5J41"/>
<dbReference type="PDBsum" id="5JCW"/>
<dbReference type="PDBsum" id="5L6X"/>
<dbReference type="PDBsum" id="5X79"/>
<dbReference type="PDBsum" id="6AP9"/>
<dbReference type="PDBsum" id="6GSS"/>
<dbReference type="PDBsum" id="6LLX"/>
<dbReference type="PDBsum" id="6Y1E"/>
<dbReference type="PDBsum" id="7BIA"/>
<dbReference type="PDBsum" id="7GSS"/>
<dbReference type="PDBsum" id="7XBA"/>
<dbReference type="PDBsum" id="8GSS"/>
<dbReference type="PDBsum" id="9GSS"/>
<dbReference type="SMR" id="P09211"/>
<dbReference type="BioGRID" id="109205">
    <property type="interactions" value="211"/>
</dbReference>
<dbReference type="CORUM" id="P09211"/>
<dbReference type="FunCoup" id="P09211">
    <property type="interactions" value="673"/>
</dbReference>
<dbReference type="IntAct" id="P09211">
    <property type="interactions" value="99"/>
</dbReference>
<dbReference type="MINT" id="P09211"/>
<dbReference type="STRING" id="9606.ENSP00000381607"/>
<dbReference type="BindingDB" id="P09211"/>
<dbReference type="ChEMBL" id="CHEMBL3902"/>
<dbReference type="DrugBank" id="DB01834">
    <property type="generic name" value="(9R,10R)-9-(S-glutathionyl)-10-hydroxy-9,10-dihydrophenanthrene"/>
</dbReference>
<dbReference type="DrugBank" id="DB03814">
    <property type="generic name" value="2-(N-morpholino)ethanesulfonic acid"/>
</dbReference>
<dbReference type="DrugBank" id="DB00316">
    <property type="generic name" value="Acetaminophen"/>
</dbReference>
<dbReference type="DrugBank" id="DB14001">
    <property type="generic name" value="alpha-Tocopherol succinate"/>
</dbReference>
<dbReference type="DrugBank" id="DB00321">
    <property type="generic name" value="Amitriptyline"/>
</dbReference>
<dbReference type="DrugBank" id="DB01008">
    <property type="generic name" value="Busulfan"/>
</dbReference>
<dbReference type="DrugBank" id="DB04972">
    <property type="generic name" value="Canfosfamide"/>
</dbReference>
<dbReference type="DrugBank" id="DB00958">
    <property type="generic name" value="Carboplatin"/>
</dbReference>
<dbReference type="DrugBank" id="DB00291">
    <property type="generic name" value="Chlorambucil"/>
</dbReference>
<dbReference type="DrugBank" id="DB02633">
    <property type="generic name" value="Cibacron Blue"/>
</dbReference>
<dbReference type="DrugBank" id="DB00515">
    <property type="generic name" value="Cisplatin"/>
</dbReference>
<dbReference type="DrugBank" id="DB01242">
    <property type="generic name" value="Clomipramine"/>
</dbReference>
<dbReference type="DrugBank" id="DB00363">
    <property type="generic name" value="Clozapine"/>
</dbReference>
<dbReference type="DrugBank" id="DB11672">
    <property type="generic name" value="Curcumin"/>
</dbReference>
<dbReference type="DrugBank" id="DB14635">
    <property type="generic name" value="Curcumin sulfate"/>
</dbReference>
<dbReference type="DrugBank" id="DB14002">
    <property type="generic name" value="D-alpha-Tocopherol acetate"/>
</dbReference>
<dbReference type="DrugBank" id="DB03619">
    <property type="generic name" value="Deoxycholic acid"/>
</dbReference>
<dbReference type="DrugBank" id="DB11831">
    <property type="generic name" value="Dinitrochlorobenzene"/>
</dbReference>
<dbReference type="DrugBank" id="DB00903">
    <property type="generic name" value="Etacrynic acid"/>
</dbReference>
<dbReference type="DrugBank" id="DB00773">
    <property type="generic name" value="Etoposide"/>
</dbReference>
<dbReference type="DrugBank" id="DB06246">
    <property type="generic name" value="Exisulind"/>
</dbReference>
<dbReference type="DrugBank" id="DB05460">
    <property type="generic name" value="Ezatiostat"/>
</dbReference>
<dbReference type="DrugBank" id="DB00143">
    <property type="generic name" value="Glutathione"/>
</dbReference>
<dbReference type="DrugBank" id="DB03310">
    <property type="generic name" value="Glutathione disulfide"/>
</dbReference>
<dbReference type="DrugBank" id="DB03003">
    <property type="generic name" value="Glutathione sulfonic acid"/>
</dbReference>
<dbReference type="DrugBank" id="DB13014">
    <property type="generic name" value="Hypericin"/>
</dbReference>
<dbReference type="DrugBank" id="DB00526">
    <property type="generic name" value="Oxaliplatin"/>
</dbReference>
<dbReference type="DrugBank" id="DB14924">
    <property type="generic name" value="Ritlecitinib"/>
</dbReference>
<dbReference type="DrugBank" id="DB08370">
    <property type="generic name" value="S-(4-BROMOBENZYL)CYSTEINE"/>
</dbReference>
<dbReference type="DrugBank" id="DB03686">
    <property type="generic name" value="S-(4-nitrobenzyl)glutathione"/>
</dbReference>
<dbReference type="DrugBank" id="DB04132">
    <property type="generic name" value="S-Hexylglutathione"/>
</dbReference>
<dbReference type="DrugBank" id="DB01915">
    <property type="generic name" value="S-Hydroxycysteine"/>
</dbReference>
<dbReference type="DrugBank" id="DB07849">
    <property type="generic name" value="S-NONYL-CYSTEINE"/>
</dbReference>
<dbReference type="DrugBank" id="DB00197">
    <property type="generic name" value="Troglitazone"/>
</dbReference>
<dbReference type="DrugBank" id="DB00163">
    <property type="generic name" value="Vitamin E"/>
</dbReference>
<dbReference type="DrugCentral" id="P09211"/>
<dbReference type="SwissLipids" id="SLP:000001615"/>
<dbReference type="GlyGen" id="P09211">
    <property type="glycosylation" value="1 site, 1 O-linked glycan (1 site)"/>
</dbReference>
<dbReference type="iPTMnet" id="P09211"/>
<dbReference type="MetOSite" id="P09211"/>
<dbReference type="PhosphoSitePlus" id="P09211"/>
<dbReference type="SwissPalm" id="P09211"/>
<dbReference type="BioMuta" id="GSTP1"/>
<dbReference type="OGP" id="P09211"/>
<dbReference type="REPRODUCTION-2DPAGE" id="IPI00219757"/>
<dbReference type="CPTAC" id="CPTAC-1412"/>
<dbReference type="CPTAC" id="CPTAC-1413"/>
<dbReference type="CPTAC" id="CPTAC-1414"/>
<dbReference type="CPTAC" id="CPTAC-1415"/>
<dbReference type="CPTAC" id="CPTAC-212"/>
<dbReference type="CPTAC" id="CPTAC-213"/>
<dbReference type="CPTAC" id="CPTAC-3231"/>
<dbReference type="CPTAC" id="CPTAC-701"/>
<dbReference type="jPOST" id="P09211"/>
<dbReference type="MassIVE" id="P09211"/>
<dbReference type="PaxDb" id="9606-ENSP00000381607"/>
<dbReference type="PeptideAtlas" id="P09211"/>
<dbReference type="PRIDE" id="P09211"/>
<dbReference type="ProteomicsDB" id="52207"/>
<dbReference type="Pumba" id="P09211"/>
<dbReference type="TopDownProteomics" id="P09211"/>
<dbReference type="ABCD" id="P09211">
    <property type="antibodies" value="1 sequenced antibody"/>
</dbReference>
<dbReference type="Antibodypedia" id="7688">
    <property type="antibodies" value="893 antibodies from 46 providers"/>
</dbReference>
<dbReference type="CPTC" id="P09211">
    <property type="antibodies" value="1 antibody"/>
</dbReference>
<dbReference type="DNASU" id="2950"/>
<dbReference type="Ensembl" id="ENST00000398606.10">
    <property type="protein sequence ID" value="ENSP00000381607.3"/>
    <property type="gene ID" value="ENSG00000084207.18"/>
</dbReference>
<dbReference type="GeneID" id="2950"/>
<dbReference type="KEGG" id="hsa:2950"/>
<dbReference type="MANE-Select" id="ENST00000398606.10">
    <property type="protein sequence ID" value="ENSP00000381607.3"/>
    <property type="RefSeq nucleotide sequence ID" value="NM_000852.4"/>
    <property type="RefSeq protein sequence ID" value="NP_000843.1"/>
</dbReference>
<dbReference type="AGR" id="HGNC:4638"/>
<dbReference type="CTD" id="2950"/>
<dbReference type="DisGeNET" id="2950"/>
<dbReference type="GeneCards" id="GSTP1"/>
<dbReference type="HGNC" id="HGNC:4638">
    <property type="gene designation" value="GSTP1"/>
</dbReference>
<dbReference type="HPA" id="ENSG00000084207">
    <property type="expression patterns" value="Tissue enhanced (choroid)"/>
</dbReference>
<dbReference type="MIM" id="134660">
    <property type="type" value="gene"/>
</dbReference>
<dbReference type="neXtProt" id="NX_P09211"/>
<dbReference type="OpenTargets" id="ENSG00000084207"/>
<dbReference type="PharmGKB" id="PA29028"/>
<dbReference type="VEuPathDB" id="HostDB:ENSG00000084207"/>
<dbReference type="eggNOG" id="KOG1695">
    <property type="taxonomic scope" value="Eukaryota"/>
</dbReference>
<dbReference type="GeneTree" id="ENSGT00940000162460"/>
<dbReference type="InParanoid" id="P09211"/>
<dbReference type="OMA" id="KKSCVFG"/>
<dbReference type="OrthoDB" id="4951845at2759"/>
<dbReference type="PAN-GO" id="P09211">
    <property type="GO annotations" value="3 GO annotations based on evolutionary models"/>
</dbReference>
<dbReference type="PhylomeDB" id="P09211"/>
<dbReference type="TreeFam" id="TF105321"/>
<dbReference type="BRENDA" id="2.5.1.18">
    <property type="organism ID" value="2681"/>
</dbReference>
<dbReference type="PathwayCommons" id="P09211"/>
<dbReference type="Reactome" id="R-HSA-156590">
    <property type="pathway name" value="Glutathione conjugation"/>
</dbReference>
<dbReference type="Reactome" id="R-HSA-3299685">
    <property type="pathway name" value="Detoxification of Reactive Oxygen Species"/>
</dbReference>
<dbReference type="Reactome" id="R-HSA-6798695">
    <property type="pathway name" value="Neutrophil degranulation"/>
</dbReference>
<dbReference type="Reactome" id="R-HSA-9753281">
    <property type="pathway name" value="Paracetamol ADME"/>
</dbReference>
<dbReference type="SABIO-RK" id="P09211"/>
<dbReference type="SignaLink" id="P09211"/>
<dbReference type="SIGNOR" id="P09211"/>
<dbReference type="BioGRID-ORCS" id="2950">
    <property type="hits" value="28 hits in 1156 CRISPR screens"/>
</dbReference>
<dbReference type="CD-CODE" id="91857CE7">
    <property type="entry name" value="Nucleolus"/>
</dbReference>
<dbReference type="CD-CODE" id="FB4E32DD">
    <property type="entry name" value="Presynaptic clusters and postsynaptic densities"/>
</dbReference>
<dbReference type="ChiTaRS" id="GSTP1">
    <property type="organism name" value="human"/>
</dbReference>
<dbReference type="EvolutionaryTrace" id="P09211"/>
<dbReference type="GeneWiki" id="GSTP1"/>
<dbReference type="GenomeRNAi" id="2950"/>
<dbReference type="Pharos" id="P09211">
    <property type="development level" value="Tchem"/>
</dbReference>
<dbReference type="PRO" id="PR:P09211"/>
<dbReference type="Proteomes" id="UP000005640">
    <property type="component" value="Chromosome 11"/>
</dbReference>
<dbReference type="RNAct" id="P09211">
    <property type="molecule type" value="protein"/>
</dbReference>
<dbReference type="Bgee" id="ENSG00000084207">
    <property type="expression patterns" value="Expressed in lower esophagus mucosa and 206 other cell types or tissues"/>
</dbReference>
<dbReference type="ExpressionAtlas" id="P09211">
    <property type="expression patterns" value="baseline and differential"/>
</dbReference>
<dbReference type="GO" id="GO:0005737">
    <property type="term" value="C:cytoplasm"/>
    <property type="evidence" value="ECO:0000304"/>
    <property type="project" value="UniProtKB"/>
</dbReference>
<dbReference type="GO" id="GO:0005829">
    <property type="term" value="C:cytosol"/>
    <property type="evidence" value="ECO:0000314"/>
    <property type="project" value="HPA"/>
</dbReference>
<dbReference type="GO" id="GO:0070062">
    <property type="term" value="C:extracellular exosome"/>
    <property type="evidence" value="ECO:0007005"/>
    <property type="project" value="UniProtKB"/>
</dbReference>
<dbReference type="GO" id="GO:0005576">
    <property type="term" value="C:extracellular region"/>
    <property type="evidence" value="ECO:0000304"/>
    <property type="project" value="Reactome"/>
</dbReference>
<dbReference type="GO" id="GO:0005615">
    <property type="term" value="C:extracellular space"/>
    <property type="evidence" value="ECO:0007005"/>
    <property type="project" value="UniProtKB"/>
</dbReference>
<dbReference type="GO" id="GO:1904813">
    <property type="term" value="C:ficolin-1-rich granule lumen"/>
    <property type="evidence" value="ECO:0000304"/>
    <property type="project" value="Reactome"/>
</dbReference>
<dbReference type="GO" id="GO:0005739">
    <property type="term" value="C:mitochondrion"/>
    <property type="evidence" value="ECO:0000314"/>
    <property type="project" value="HPA"/>
</dbReference>
<dbReference type="GO" id="GO:0005634">
    <property type="term" value="C:nucleus"/>
    <property type="evidence" value="ECO:0007669"/>
    <property type="project" value="UniProtKB-SubCell"/>
</dbReference>
<dbReference type="GO" id="GO:0034774">
    <property type="term" value="C:secretory granule lumen"/>
    <property type="evidence" value="ECO:0000304"/>
    <property type="project" value="Reactome"/>
</dbReference>
<dbReference type="GO" id="GO:0097057">
    <property type="term" value="C:TRAF2-GSTP1 complex"/>
    <property type="evidence" value="ECO:0000314"/>
    <property type="project" value="BHF-UCL"/>
</dbReference>
<dbReference type="GO" id="GO:0031982">
    <property type="term" value="C:vesicle"/>
    <property type="evidence" value="ECO:0007005"/>
    <property type="project" value="UniProtKB"/>
</dbReference>
<dbReference type="GO" id="GO:0035731">
    <property type="term" value="F:dinitrosyl-iron complex binding"/>
    <property type="evidence" value="ECO:0000314"/>
    <property type="project" value="BHF-UCL"/>
</dbReference>
<dbReference type="GO" id="GO:0005504">
    <property type="term" value="F:fatty acid binding"/>
    <property type="evidence" value="ECO:0000353"/>
    <property type="project" value="BHF-UCL"/>
</dbReference>
<dbReference type="GO" id="GO:0004602">
    <property type="term" value="F:glutathione peroxidase activity"/>
    <property type="evidence" value="ECO:0000314"/>
    <property type="project" value="BHF-UCL"/>
</dbReference>
<dbReference type="GO" id="GO:0004364">
    <property type="term" value="F:glutathione transferase activity"/>
    <property type="evidence" value="ECO:0000314"/>
    <property type="project" value="UniProtKB"/>
</dbReference>
<dbReference type="GO" id="GO:0008432">
    <property type="term" value="F:JUN kinase binding"/>
    <property type="evidence" value="ECO:0000250"/>
    <property type="project" value="BHF-UCL"/>
</dbReference>
<dbReference type="GO" id="GO:0070026">
    <property type="term" value="F:nitric oxide binding"/>
    <property type="evidence" value="ECO:0000303"/>
    <property type="project" value="BHF-UCL"/>
</dbReference>
<dbReference type="GO" id="GO:0030291">
    <property type="term" value="F:protein serine/threonine kinase inhibitor activity"/>
    <property type="evidence" value="ECO:0000250"/>
    <property type="project" value="BHF-UCL"/>
</dbReference>
<dbReference type="GO" id="GO:0035730">
    <property type="term" value="F:S-nitrosoglutathione binding"/>
    <property type="evidence" value="ECO:0000314"/>
    <property type="project" value="BHF-UCL"/>
</dbReference>
<dbReference type="GO" id="GO:0015643">
    <property type="term" value="F:toxic substance binding"/>
    <property type="evidence" value="ECO:0007669"/>
    <property type="project" value="Ensembl"/>
</dbReference>
<dbReference type="GO" id="GO:0031100">
    <property type="term" value="P:animal organ regeneration"/>
    <property type="evidence" value="ECO:0007669"/>
    <property type="project" value="Ensembl"/>
</dbReference>
<dbReference type="GO" id="GO:0071460">
    <property type="term" value="P:cellular response to cell-matrix adhesion"/>
    <property type="evidence" value="ECO:0007669"/>
    <property type="project" value="Ensembl"/>
</dbReference>
<dbReference type="GO" id="GO:0071364">
    <property type="term" value="P:cellular response to epidermal growth factor stimulus"/>
    <property type="evidence" value="ECO:0007669"/>
    <property type="project" value="Ensembl"/>
</dbReference>
<dbReference type="GO" id="GO:0071385">
    <property type="term" value="P:cellular response to glucocorticoid stimulus"/>
    <property type="evidence" value="ECO:0007669"/>
    <property type="project" value="Ensembl"/>
</dbReference>
<dbReference type="GO" id="GO:0032869">
    <property type="term" value="P:cellular response to insulin stimulus"/>
    <property type="evidence" value="ECO:0007669"/>
    <property type="project" value="Ensembl"/>
</dbReference>
<dbReference type="GO" id="GO:0071222">
    <property type="term" value="P:cellular response to lipopolysaccharide"/>
    <property type="evidence" value="ECO:0000250"/>
    <property type="project" value="BHF-UCL"/>
</dbReference>
<dbReference type="GO" id="GO:0007417">
    <property type="term" value="P:central nervous system development"/>
    <property type="evidence" value="ECO:0000304"/>
    <property type="project" value="ProtInc"/>
</dbReference>
<dbReference type="GO" id="GO:0035726">
    <property type="term" value="P:common myeloid progenitor cell proliferation"/>
    <property type="evidence" value="ECO:0000250"/>
    <property type="project" value="BHF-UCL"/>
</dbReference>
<dbReference type="GO" id="GO:1901687">
    <property type="term" value="P:glutathione derivative biosynthetic process"/>
    <property type="evidence" value="ECO:0000314"/>
    <property type="project" value="UniProtKB"/>
</dbReference>
<dbReference type="GO" id="GO:0006749">
    <property type="term" value="P:glutathione metabolic process"/>
    <property type="evidence" value="ECO:0000314"/>
    <property type="project" value="UniProtKB"/>
</dbReference>
<dbReference type="GO" id="GO:0051122">
    <property type="term" value="P:hepoxilin biosynthetic process"/>
    <property type="evidence" value="ECO:0000314"/>
    <property type="project" value="UniProtKB"/>
</dbReference>
<dbReference type="GO" id="GO:0043651">
    <property type="term" value="P:linoleic acid metabolic process"/>
    <property type="evidence" value="ECO:0000314"/>
    <property type="project" value="BHF-UCL"/>
</dbReference>
<dbReference type="GO" id="GO:0002674">
    <property type="term" value="P:negative regulation of acute inflammatory response"/>
    <property type="evidence" value="ECO:0000303"/>
    <property type="project" value="BHF-UCL"/>
</dbReference>
<dbReference type="GO" id="GO:0043066">
    <property type="term" value="P:negative regulation of apoptotic process"/>
    <property type="evidence" value="ECO:0000304"/>
    <property type="project" value="UniProtKB"/>
</dbReference>
<dbReference type="GO" id="GO:0043124">
    <property type="term" value="P:negative regulation of canonical NF-kappaB signal transduction"/>
    <property type="evidence" value="ECO:0000250"/>
    <property type="project" value="BHF-UCL"/>
</dbReference>
<dbReference type="GO" id="GO:0070373">
    <property type="term" value="P:negative regulation of ERK1 and ERK2 cascade"/>
    <property type="evidence" value="ECO:0000314"/>
    <property type="project" value="BHF-UCL"/>
</dbReference>
<dbReference type="GO" id="GO:2001237">
    <property type="term" value="P:negative regulation of extrinsic apoptotic signaling pathway"/>
    <property type="evidence" value="ECO:0000314"/>
    <property type="project" value="BHF-UCL"/>
</dbReference>
<dbReference type="GO" id="GO:0048147">
    <property type="term" value="P:negative regulation of fibroblast proliferation"/>
    <property type="evidence" value="ECO:0000250"/>
    <property type="project" value="BHF-UCL"/>
</dbReference>
<dbReference type="GO" id="GO:0032691">
    <property type="term" value="P:negative regulation of interleukin-1 beta production"/>
    <property type="evidence" value="ECO:0000314"/>
    <property type="project" value="BHF-UCL"/>
</dbReference>
<dbReference type="GO" id="GO:0046329">
    <property type="term" value="P:negative regulation of JNK cascade"/>
    <property type="evidence" value="ECO:0000314"/>
    <property type="project" value="BHF-UCL"/>
</dbReference>
<dbReference type="GO" id="GO:0070664">
    <property type="term" value="P:negative regulation of leukocyte proliferation"/>
    <property type="evidence" value="ECO:0000250"/>
    <property type="project" value="BHF-UCL"/>
</dbReference>
<dbReference type="GO" id="GO:0043409">
    <property type="term" value="P:negative regulation of MAPK cascade"/>
    <property type="evidence" value="ECO:0000303"/>
    <property type="project" value="BHF-UCL"/>
</dbReference>
<dbReference type="GO" id="GO:0071638">
    <property type="term" value="P:negative regulation of monocyte chemotactic protein-1 production"/>
    <property type="evidence" value="ECO:0000314"/>
    <property type="project" value="BHF-UCL"/>
</dbReference>
<dbReference type="GO" id="GO:0071672">
    <property type="term" value="P:negative regulation of smooth muscle cell chemotaxis"/>
    <property type="evidence" value="ECO:0007669"/>
    <property type="project" value="Ensembl"/>
</dbReference>
<dbReference type="GO" id="GO:0032873">
    <property type="term" value="P:negative regulation of stress-activated MAPK cascade"/>
    <property type="evidence" value="ECO:0000250"/>
    <property type="project" value="BHF-UCL"/>
</dbReference>
<dbReference type="GO" id="GO:0000122">
    <property type="term" value="P:negative regulation of transcription by RNA polymerase II"/>
    <property type="evidence" value="ECO:0000250"/>
    <property type="project" value="BHF-UCL"/>
</dbReference>
<dbReference type="GO" id="GO:0032720">
    <property type="term" value="P:negative regulation of tumor necrosis factor production"/>
    <property type="evidence" value="ECO:0000314"/>
    <property type="project" value="BHF-UCL"/>
</dbReference>
<dbReference type="GO" id="GO:0010804">
    <property type="term" value="P:negative regulation of tumor necrosis factor-mediated signaling pathway"/>
    <property type="evidence" value="ECO:0000305"/>
    <property type="project" value="BHF-UCL"/>
</dbReference>
<dbReference type="GO" id="GO:1904706">
    <property type="term" value="P:negative regulation of vascular associated smooth muscle cell proliferation"/>
    <property type="evidence" value="ECO:0007669"/>
    <property type="project" value="Ensembl"/>
</dbReference>
<dbReference type="GO" id="GO:0035732">
    <property type="term" value="P:nitric oxide storage"/>
    <property type="evidence" value="ECO:0000303"/>
    <property type="project" value="BHF-UCL"/>
</dbReference>
<dbReference type="GO" id="GO:0014003">
    <property type="term" value="P:oligodendrocyte development"/>
    <property type="evidence" value="ECO:0007669"/>
    <property type="project" value="Ensembl"/>
</dbReference>
<dbReference type="GO" id="GO:0032930">
    <property type="term" value="P:positive regulation of superoxide anion generation"/>
    <property type="evidence" value="ECO:0000250"/>
    <property type="project" value="BHF-UCL"/>
</dbReference>
<dbReference type="GO" id="GO:0006693">
    <property type="term" value="P:prostaglandin metabolic process"/>
    <property type="evidence" value="ECO:0000314"/>
    <property type="project" value="UniProtKB"/>
</dbReference>
<dbReference type="GO" id="GO:0070372">
    <property type="term" value="P:regulation of ERK1 and ERK2 cascade"/>
    <property type="evidence" value="ECO:0000250"/>
    <property type="project" value="BHF-UCL"/>
</dbReference>
<dbReference type="GO" id="GO:0032872">
    <property type="term" value="P:regulation of stress-activated MAPK cascade"/>
    <property type="evidence" value="ECO:0000250"/>
    <property type="project" value="BHF-UCL"/>
</dbReference>
<dbReference type="GO" id="GO:0043200">
    <property type="term" value="P:response to amino acid"/>
    <property type="evidence" value="ECO:0007669"/>
    <property type="project" value="Ensembl"/>
</dbReference>
<dbReference type="GO" id="GO:0032355">
    <property type="term" value="P:response to estradiol"/>
    <property type="evidence" value="ECO:0007669"/>
    <property type="project" value="Ensembl"/>
</dbReference>
<dbReference type="GO" id="GO:0045471">
    <property type="term" value="P:response to ethanol"/>
    <property type="evidence" value="ECO:0007669"/>
    <property type="project" value="Ensembl"/>
</dbReference>
<dbReference type="GO" id="GO:0033591">
    <property type="term" value="P:response to L-ascorbic acid"/>
    <property type="evidence" value="ECO:0007669"/>
    <property type="project" value="Ensembl"/>
</dbReference>
<dbReference type="GO" id="GO:0000302">
    <property type="term" value="P:response to reactive oxygen species"/>
    <property type="evidence" value="ECO:0000250"/>
    <property type="project" value="BHF-UCL"/>
</dbReference>
<dbReference type="GO" id="GO:0006805">
    <property type="term" value="P:xenobiotic metabolic process"/>
    <property type="evidence" value="ECO:0000314"/>
    <property type="project" value="UniProtKB"/>
</dbReference>
<dbReference type="CDD" id="cd03210">
    <property type="entry name" value="GST_C_Pi"/>
    <property type="match status" value="1"/>
</dbReference>
<dbReference type="CDD" id="cd03076">
    <property type="entry name" value="GST_N_Pi"/>
    <property type="match status" value="1"/>
</dbReference>
<dbReference type="FunFam" id="1.20.1050.10:FF:000053">
    <property type="entry name" value="Glutathione S-transferase P"/>
    <property type="match status" value="1"/>
</dbReference>
<dbReference type="FunFam" id="3.40.30.10:FF:000071">
    <property type="entry name" value="Glutathione S-transferase P"/>
    <property type="match status" value="1"/>
</dbReference>
<dbReference type="FunFam" id="3.40.30.10:FF:000392">
    <property type="entry name" value="Glutathione S-transferase pi 1"/>
    <property type="match status" value="1"/>
</dbReference>
<dbReference type="Gene3D" id="1.20.1050.10">
    <property type="match status" value="1"/>
</dbReference>
<dbReference type="Gene3D" id="3.40.30.10">
    <property type="entry name" value="Glutaredoxin"/>
    <property type="match status" value="1"/>
</dbReference>
<dbReference type="InterPro" id="IPR010987">
    <property type="entry name" value="Glutathione-S-Trfase_C-like"/>
</dbReference>
<dbReference type="InterPro" id="IPR036282">
    <property type="entry name" value="Glutathione-S-Trfase_C_sf"/>
</dbReference>
<dbReference type="InterPro" id="IPR040079">
    <property type="entry name" value="Glutathione_S-Trfase"/>
</dbReference>
<dbReference type="InterPro" id="IPR004045">
    <property type="entry name" value="Glutathione_S-Trfase_N"/>
</dbReference>
<dbReference type="InterPro" id="IPR004046">
    <property type="entry name" value="GST_C"/>
</dbReference>
<dbReference type="InterPro" id="IPR003082">
    <property type="entry name" value="GST_pi"/>
</dbReference>
<dbReference type="InterPro" id="IPR050213">
    <property type="entry name" value="GST_superfamily"/>
</dbReference>
<dbReference type="InterPro" id="IPR036249">
    <property type="entry name" value="Thioredoxin-like_sf"/>
</dbReference>
<dbReference type="PANTHER" id="PTHR11571">
    <property type="entry name" value="GLUTATHIONE S-TRANSFERASE"/>
    <property type="match status" value="1"/>
</dbReference>
<dbReference type="PANTHER" id="PTHR11571:SF255">
    <property type="entry name" value="GLUTATHIONE S-TRANSFERASE P"/>
    <property type="match status" value="1"/>
</dbReference>
<dbReference type="Pfam" id="PF14497">
    <property type="entry name" value="GST_C_3"/>
    <property type="match status" value="1"/>
</dbReference>
<dbReference type="Pfam" id="PF02798">
    <property type="entry name" value="GST_N"/>
    <property type="match status" value="1"/>
</dbReference>
<dbReference type="PRINTS" id="PR01268">
    <property type="entry name" value="GSTRNSFRASEP"/>
</dbReference>
<dbReference type="SFLD" id="SFLDG01205">
    <property type="entry name" value="AMPS.1"/>
    <property type="match status" value="1"/>
</dbReference>
<dbReference type="SFLD" id="SFLDS00019">
    <property type="entry name" value="Glutathione_Transferase_(cytos"/>
    <property type="match status" value="1"/>
</dbReference>
<dbReference type="SUPFAM" id="SSF47616">
    <property type="entry name" value="GST C-terminal domain-like"/>
    <property type="match status" value="1"/>
</dbReference>
<dbReference type="SUPFAM" id="SSF52833">
    <property type="entry name" value="Thioredoxin-like"/>
    <property type="match status" value="1"/>
</dbReference>
<dbReference type="PROSITE" id="PS50405">
    <property type="entry name" value="GST_CTER"/>
    <property type="match status" value="1"/>
</dbReference>
<dbReference type="PROSITE" id="PS50404">
    <property type="entry name" value="GST_NTER"/>
    <property type="match status" value="1"/>
</dbReference>